<protein>
    <recommendedName>
        <fullName>Transcription factor Sp1</fullName>
    </recommendedName>
</protein>
<reference key="1">
    <citation type="journal article" date="2011" name="Biochem. Biophys. Res. Commun.">
        <title>Identification of a novel Sp1 splice variant as a strong transcriptional activator.</title>
        <authorList>
            <person name="Infantino V."/>
            <person name="Convertini P."/>
            <person name="Iacobazzi F."/>
            <person name="Pisano I."/>
            <person name="Scarcia P."/>
            <person name="Iacobazzi V."/>
        </authorList>
    </citation>
    <scope>NUCLEOTIDE SEQUENCE [MRNA] (ISOFORM 3)</scope>
    <scope>FUNCTION</scope>
    <scope>TISSUE SPECIFICITY</scope>
</reference>
<reference key="2">
    <citation type="journal article" date="2006" name="Nature">
        <title>The finished DNA sequence of human chromosome 12.</title>
        <authorList>
            <person name="Scherer S.E."/>
            <person name="Muzny D.M."/>
            <person name="Buhay C.J."/>
            <person name="Chen R."/>
            <person name="Cree A."/>
            <person name="Ding Y."/>
            <person name="Dugan-Rocha S."/>
            <person name="Gill R."/>
            <person name="Gunaratne P."/>
            <person name="Harris R.A."/>
            <person name="Hawes A.C."/>
            <person name="Hernandez J."/>
            <person name="Hodgson A.V."/>
            <person name="Hume J."/>
            <person name="Jackson A."/>
            <person name="Khan Z.M."/>
            <person name="Kovar-Smith C."/>
            <person name="Lewis L.R."/>
            <person name="Lozado R.J."/>
            <person name="Metzker M.L."/>
            <person name="Milosavljevic A."/>
            <person name="Miner G.R."/>
            <person name="Montgomery K.T."/>
            <person name="Morgan M.B."/>
            <person name="Nazareth L.V."/>
            <person name="Scott G."/>
            <person name="Sodergren E."/>
            <person name="Song X.-Z."/>
            <person name="Steffen D."/>
            <person name="Lovering R.C."/>
            <person name="Wheeler D.A."/>
            <person name="Worley K.C."/>
            <person name="Yuan Y."/>
            <person name="Zhang Z."/>
            <person name="Adams C.Q."/>
            <person name="Ansari-Lari M.A."/>
            <person name="Ayele M."/>
            <person name="Brown M.J."/>
            <person name="Chen G."/>
            <person name="Chen Z."/>
            <person name="Clerc-Blankenburg K.P."/>
            <person name="Davis C."/>
            <person name="Delgado O."/>
            <person name="Dinh H.H."/>
            <person name="Draper H."/>
            <person name="Gonzalez-Garay M.L."/>
            <person name="Havlak P."/>
            <person name="Jackson L.R."/>
            <person name="Jacob L.S."/>
            <person name="Kelly S.H."/>
            <person name="Li L."/>
            <person name="Li Z."/>
            <person name="Liu J."/>
            <person name="Liu W."/>
            <person name="Lu J."/>
            <person name="Maheshwari M."/>
            <person name="Nguyen B.-V."/>
            <person name="Okwuonu G.O."/>
            <person name="Pasternak S."/>
            <person name="Perez L.M."/>
            <person name="Plopper F.J.H."/>
            <person name="Santibanez J."/>
            <person name="Shen H."/>
            <person name="Tabor P.E."/>
            <person name="Verduzco D."/>
            <person name="Waldron L."/>
            <person name="Wang Q."/>
            <person name="Williams G.A."/>
            <person name="Zhang J."/>
            <person name="Zhou J."/>
            <person name="Allen C.C."/>
            <person name="Amin A.G."/>
            <person name="Anyalebechi V."/>
            <person name="Bailey M."/>
            <person name="Barbaria J.A."/>
            <person name="Bimage K.E."/>
            <person name="Bryant N.P."/>
            <person name="Burch P.E."/>
            <person name="Burkett C.E."/>
            <person name="Burrell K.L."/>
            <person name="Calderon E."/>
            <person name="Cardenas V."/>
            <person name="Carter K."/>
            <person name="Casias K."/>
            <person name="Cavazos I."/>
            <person name="Cavazos S.R."/>
            <person name="Ceasar H."/>
            <person name="Chacko J."/>
            <person name="Chan S.N."/>
            <person name="Chavez D."/>
            <person name="Christopoulos C."/>
            <person name="Chu J."/>
            <person name="Cockrell R."/>
            <person name="Cox C.D."/>
            <person name="Dang M."/>
            <person name="Dathorne S.R."/>
            <person name="David R."/>
            <person name="Davis C.M."/>
            <person name="Davy-Carroll L."/>
            <person name="Deshazo D.R."/>
            <person name="Donlin J.E."/>
            <person name="D'Souza L."/>
            <person name="Eaves K.A."/>
            <person name="Egan A."/>
            <person name="Emery-Cohen A.J."/>
            <person name="Escotto M."/>
            <person name="Flagg N."/>
            <person name="Forbes L.D."/>
            <person name="Gabisi A.M."/>
            <person name="Garza M."/>
            <person name="Hamilton C."/>
            <person name="Henderson N."/>
            <person name="Hernandez O."/>
            <person name="Hines S."/>
            <person name="Hogues M.E."/>
            <person name="Huang M."/>
            <person name="Idlebird D.G."/>
            <person name="Johnson R."/>
            <person name="Jolivet A."/>
            <person name="Jones S."/>
            <person name="Kagan R."/>
            <person name="King L.M."/>
            <person name="Leal B."/>
            <person name="Lebow H."/>
            <person name="Lee S."/>
            <person name="LeVan J.M."/>
            <person name="Lewis L.C."/>
            <person name="London P."/>
            <person name="Lorensuhewa L.M."/>
            <person name="Loulseged H."/>
            <person name="Lovett D.A."/>
            <person name="Lucier A."/>
            <person name="Lucier R.L."/>
            <person name="Ma J."/>
            <person name="Madu R.C."/>
            <person name="Mapua P."/>
            <person name="Martindale A.D."/>
            <person name="Martinez E."/>
            <person name="Massey E."/>
            <person name="Mawhiney S."/>
            <person name="Meador M.G."/>
            <person name="Mendez S."/>
            <person name="Mercado C."/>
            <person name="Mercado I.C."/>
            <person name="Merritt C.E."/>
            <person name="Miner Z.L."/>
            <person name="Minja E."/>
            <person name="Mitchell T."/>
            <person name="Mohabbat F."/>
            <person name="Mohabbat K."/>
            <person name="Montgomery B."/>
            <person name="Moore N."/>
            <person name="Morris S."/>
            <person name="Munidasa M."/>
            <person name="Ngo R.N."/>
            <person name="Nguyen N.B."/>
            <person name="Nickerson E."/>
            <person name="Nwaokelemeh O.O."/>
            <person name="Nwokenkwo S."/>
            <person name="Obregon M."/>
            <person name="Oguh M."/>
            <person name="Oragunye N."/>
            <person name="Oviedo R.J."/>
            <person name="Parish B.J."/>
            <person name="Parker D.N."/>
            <person name="Parrish J."/>
            <person name="Parks K.L."/>
            <person name="Paul H.A."/>
            <person name="Payton B.A."/>
            <person name="Perez A."/>
            <person name="Perrin W."/>
            <person name="Pickens A."/>
            <person name="Primus E.L."/>
            <person name="Pu L.-L."/>
            <person name="Puazo M."/>
            <person name="Quiles M.M."/>
            <person name="Quiroz J.B."/>
            <person name="Rabata D."/>
            <person name="Reeves K."/>
            <person name="Ruiz S.J."/>
            <person name="Shao H."/>
            <person name="Sisson I."/>
            <person name="Sonaike T."/>
            <person name="Sorelle R.P."/>
            <person name="Sutton A.E."/>
            <person name="Svatek A.F."/>
            <person name="Svetz L.A."/>
            <person name="Tamerisa K.S."/>
            <person name="Taylor T.R."/>
            <person name="Teague B."/>
            <person name="Thomas N."/>
            <person name="Thorn R.D."/>
            <person name="Trejos Z.Y."/>
            <person name="Trevino B.K."/>
            <person name="Ukegbu O.N."/>
            <person name="Urban J.B."/>
            <person name="Vasquez L.I."/>
            <person name="Vera V.A."/>
            <person name="Villasana D.M."/>
            <person name="Wang L."/>
            <person name="Ward-Moore S."/>
            <person name="Warren J.T."/>
            <person name="Wei X."/>
            <person name="White F."/>
            <person name="Williamson A.L."/>
            <person name="Wleczyk R."/>
            <person name="Wooden H.S."/>
            <person name="Wooden S.H."/>
            <person name="Yen J."/>
            <person name="Yoon L."/>
            <person name="Yoon V."/>
            <person name="Zorrilla S.E."/>
            <person name="Nelson D."/>
            <person name="Kucherlapati R."/>
            <person name="Weinstock G."/>
            <person name="Gibbs R.A."/>
        </authorList>
    </citation>
    <scope>NUCLEOTIDE SEQUENCE [LARGE SCALE GENOMIC DNA]</scope>
</reference>
<reference key="3">
    <citation type="submission" date="2005-07" db="EMBL/GenBank/DDBJ databases">
        <authorList>
            <person name="Mural R.J."/>
            <person name="Istrail S."/>
            <person name="Sutton G.G."/>
            <person name="Florea L."/>
            <person name="Halpern A.L."/>
            <person name="Mobarry C.M."/>
            <person name="Lippert R."/>
            <person name="Walenz B."/>
            <person name="Shatkay H."/>
            <person name="Dew I."/>
            <person name="Miller J.R."/>
            <person name="Flanigan M.J."/>
            <person name="Edwards N.J."/>
            <person name="Bolanos R."/>
            <person name="Fasulo D."/>
            <person name="Halldorsson B.V."/>
            <person name="Hannenhalli S."/>
            <person name="Turner R."/>
            <person name="Yooseph S."/>
            <person name="Lu F."/>
            <person name="Nusskern D.R."/>
            <person name="Shue B.C."/>
            <person name="Zheng X.H."/>
            <person name="Zhong F."/>
            <person name="Delcher A.L."/>
            <person name="Huson D.H."/>
            <person name="Kravitz S.A."/>
            <person name="Mouchard L."/>
            <person name="Reinert K."/>
            <person name="Remington K.A."/>
            <person name="Clark A.G."/>
            <person name="Waterman M.S."/>
            <person name="Eichler E.E."/>
            <person name="Adams M.D."/>
            <person name="Hunkapiller M.W."/>
            <person name="Myers E.W."/>
            <person name="Venter J.C."/>
        </authorList>
    </citation>
    <scope>NUCLEOTIDE SEQUENCE [LARGE SCALE GENOMIC DNA]</scope>
</reference>
<reference key="4">
    <citation type="journal article" date="2004" name="Genome Res.">
        <title>The status, quality, and expansion of the NIH full-length cDNA project: the Mammalian Gene Collection (MGC).</title>
        <authorList>
            <consortium name="The MGC Project Team"/>
        </authorList>
    </citation>
    <scope>NUCLEOTIDE SEQUENCE [LARGE SCALE MRNA] (ISOFORM 1)</scope>
    <source>
        <tissue>Brain</tissue>
        <tissue>Testis</tissue>
    </source>
</reference>
<reference key="5">
    <citation type="submission" date="2000-04" db="EMBL/GenBank/DDBJ databases">
        <authorList>
            <person name="Haggart M.H."/>
            <person name="Ladurner A.G."/>
        </authorList>
    </citation>
    <scope>NUCLEOTIDE SEQUENCE [MRNA] OF 4-785 (ISOFORM 1)</scope>
    <source>
        <tissue>Cervix carcinoma</tissue>
    </source>
</reference>
<reference key="6">
    <citation type="journal article" date="2000" name="J. Biol. Chem.">
        <title>Heterogeneous Sp1 mRNAs in human HepG2 cells include a product of homotypic trans-splicing.</title>
        <authorList>
            <person name="Takahara T."/>
            <person name="Kanazu S."/>
            <person name="Yanagisawa S."/>
            <person name="Akanuma H."/>
        </authorList>
    </citation>
    <scope>NUCLEOTIDE SEQUENCE [GENOMIC DNA] OF 1-558 (ISOFORM 1)</scope>
    <scope>TRANS-SPLICING</scope>
</reference>
<reference key="7">
    <citation type="journal article" date="1987" name="Cell">
        <title>Isolation of cDNA encoding transcription factor Sp1 and functional analysis of the DNA binding domain.</title>
        <authorList>
            <person name="Kadonaga J.T."/>
            <person name="Carner K.R."/>
            <person name="Masiarz F.R."/>
            <person name="Tjian R."/>
        </authorList>
    </citation>
    <scope>NUCLEOTIDE SEQUENCE [MRNA] OF 90-785 (ISOFORM 1/2)</scope>
    <scope>PROTEIN SEQUENCE OF 359-375 AND 670-675</scope>
</reference>
<reference key="8">
    <citation type="submission" date="2000-04" db="EMBL/GenBank/DDBJ databases">
        <title>Expression of transcription factor Sp1 mRNA in mammalian cells.</title>
        <authorList>
            <person name="Nicolas M."/>
            <person name="Noe V."/>
            <person name="Ciudad C.J."/>
        </authorList>
    </citation>
    <scope>NUCLEOTIDE SEQUENCE [MRNA] OF 1-109 (ISOFORM 1)</scope>
</reference>
<reference key="9">
    <citation type="submission" date="2000-02" db="EMBL/GenBank/DDBJ databases">
        <title>Sequencing of the 5' end of human transcription factor SP1 mRNA.</title>
        <authorList>
            <person name="Handschug K."/>
            <person name="Huebner A."/>
        </authorList>
    </citation>
    <scope>NUCLEOTIDE SEQUENCE [MRNA] OF 1-98 (ISOFORM 1)</scope>
</reference>
<reference key="10">
    <citation type="journal article" date="1988" name="Cell">
        <title>O-glycosylation of eukaryotic transcription factors: implications for mechanisms of transcriptional regulation.</title>
        <authorList>
            <person name="Jackson S.P."/>
            <person name="Tjian R."/>
        </authorList>
    </citation>
    <scope>GLYCOSYLATION</scope>
</reference>
<reference key="11">
    <citation type="journal article" date="1988" name="Cell">
        <title>Analysis of Sp1 in vivo reveals multiple transcriptional domains, including a novel glutamine-rich activation motif.</title>
        <authorList>
            <person name="Courey A.J."/>
            <person name="Tjian R."/>
        </authorList>
    </citation>
    <scope>TRANSACTIVATION DOMAINS</scope>
</reference>
<reference key="12">
    <citation type="journal article" date="1995" name="J. Biol. Chem.">
        <title>Interaction of virion protein Vpr of human immunodeficiency virus type 1 with cellular transcription factor Sp1 and trans-activation of viral long terminal repeat.</title>
        <authorList>
            <person name="Wang L."/>
            <person name="Mukherjee S."/>
            <person name="Jia F."/>
            <person name="Narayan O."/>
            <person name="Zhao L.J."/>
        </authorList>
    </citation>
    <scope>INTERACTION WITH HIV-1 VPR (MICROBIAL INFECTION)</scope>
</reference>
<reference key="13">
    <citation type="journal article" date="1996" name="J. Biol. Chem.">
        <title>The serotonin 1a receptor gene contains a TATA-less promoter that responds to MAZ and Sp1.</title>
        <authorList>
            <person name="Parks C.L."/>
            <person name="Shenk T."/>
        </authorList>
    </citation>
    <scope>IDENTIFICATION OF SEROTONIN 1A RECEPTOR PROMOTER BINDING SITES</scope>
</reference>
<reference key="14">
    <citation type="journal article" date="1997" name="Mol. Cell. Biol.">
        <title>O glycosylation of an Sp1-derived peptide blocks known Sp1 protein interactions.</title>
        <authorList>
            <person name="Roos M.D."/>
            <person name="Su K."/>
            <person name="Baker J.R."/>
            <person name="Kudlow J.E."/>
        </authorList>
    </citation>
    <scope>GLYCOSYLATION AT SER-491</scope>
    <scope>MUTAGENESIS OF SER-491</scope>
    <scope>IDENTIFICATION BY MASS SPECTROMETRY</scope>
</reference>
<reference key="15">
    <citation type="journal article" date="1998" name="J. Mol. Biol.">
        <title>The SV40 capsid protein VP3 cooperates with the cellular transcription factor Sp1 in DNA-binding and in regulating viral promoter activity.</title>
        <authorList>
            <person name="Gordon-Shaag A."/>
            <person name="Ben-Nun-Shaul O."/>
            <person name="Kasamatsu H."/>
            <person name="Oppenheim A.B."/>
            <person name="Oppenheim A."/>
        </authorList>
    </citation>
    <scope>INTERACTION WITH SV40 VP2/3 (MICROBIAL INFECTION)</scope>
</reference>
<reference key="16">
    <citation type="journal article" date="1999" name="J. Biol. Chem.">
        <title>Functional interactions between Sp1 or Sp3 and the helicase-like transcription factor mediate basal expression from the human plasminogen activator inhibitor-1 gene.</title>
        <authorList>
            <person name="Ding H."/>
            <person name="Benotmane A.M."/>
            <person name="Suske G."/>
            <person name="Collen D."/>
            <person name="Belayew A."/>
        </authorList>
    </citation>
    <scope>FUNCTION</scope>
    <scope>INTERACTION WITH HLTF</scope>
</reference>
<reference key="17">
    <citation type="journal article" date="2000" name="Mol. Cell. Biochem.">
        <title>A set of proteins interacting with transcription factor Sp1 identified in a two-hybrid screening.</title>
        <authorList>
            <person name="Gunther M."/>
            <person name="Laithier M."/>
            <person name="Brison O."/>
        </authorList>
    </citation>
    <scope>INTERACTION WITH ATF7IP; PHC2; POGZ AND HCFC1</scope>
    <source>
        <tissue>Colon</tissue>
    </source>
</reference>
<reference key="18">
    <citation type="journal article" date="2001" name="Proc. Natl. Acad. Sci. U.S.A.">
        <title>O-linkage of N-acetylglucosamine to Sp1 activation domain inhibits its transcriptional capability.</title>
        <authorList>
            <person name="Yang X."/>
            <person name="Su K."/>
            <person name="Roos M.D."/>
            <person name="Chang Q."/>
            <person name="Paterson A.J."/>
            <person name="Kudlow J.E."/>
        </authorList>
    </citation>
    <scope>GLYCOSYLATION AT SER-491</scope>
    <scope>FUNCTION</scope>
    <scope>MUTAGENESIS OF SER-491</scope>
</reference>
<reference key="19">
    <citation type="journal article" date="2002" name="J. Biol. Chem.">
        <title>Identification of two Sp1 phosphorylation sites for p42/p44 mitogen-activated protein kinases: their implication in vascular endothelial growth factor gene transcription.</title>
        <authorList>
            <person name="Milanini-Mongiat J."/>
            <person name="Pouyssegur J."/>
            <person name="Pages G."/>
        </authorList>
    </citation>
    <scope>PHOSPHORYLATION AT THR-453 AND THR-739</scope>
    <scope>FUNCTION</scope>
    <scope>MUTAGENESIS OF THR-355; THR-453 AND THR-739</scope>
</reference>
<reference key="20">
    <citation type="journal article" date="2002" name="J. Biol. Chem.">
        <title>POZ domain transcription factor, FBI-1, represses transcription of ADH5/FDH by interacting with the zinc finger and interfering with DNA binding activity of Sp1.</title>
        <authorList>
            <person name="Lee D.K."/>
            <person name="Suh D."/>
            <person name="Edenberg H.J."/>
            <person name="Hur M.W."/>
        </authorList>
    </citation>
    <scope>INTERACTION WITH ZBTB7A</scope>
</reference>
<reference key="21">
    <citation type="journal article" date="2002" name="J. Virol.">
        <title>Cellular transcription factor Sp1 recruits simian virus 40 capsid proteins to the viral packaging signal, ses.</title>
        <authorList>
            <person name="Gordon-Shaag A."/>
            <person name="Ben-Nun-Shaul O."/>
            <person name="Roitman V."/>
            <person name="Yosef Y."/>
            <person name="Oppenheim A."/>
        </authorList>
    </citation>
    <scope>INTERACTION WITH SV40 VP1 (MICROBIAL INFECTION)</scope>
</reference>
<reference key="22">
    <citation type="journal article" date="2003" name="J. Biol. Chem.">
        <title>Che-1 arrests human colon carcinoma cell proliferation by displacing HDAC1 from the p21WAF1/CIP1 promoter.</title>
        <authorList>
            <person name="Di Padova M."/>
            <person name="Bruno T."/>
            <person name="De Nicola F."/>
            <person name="Iezzi S."/>
            <person name="D'Angelo C."/>
            <person name="Gallo R."/>
            <person name="Nicosia D."/>
            <person name="Corbi N."/>
            <person name="Biroccio A."/>
            <person name="Floridi A."/>
            <person name="Passananti C."/>
            <person name="Fanciulli M."/>
        </authorList>
    </citation>
    <scope>INTERACTION WITH AATF</scope>
</reference>
<reference key="23">
    <citation type="journal article" date="2003" name="J. Biol. Chem.">
        <title>Interaction between the varicella zoster virus IE62 major transactivator and cellular transcription factor Sp1.</title>
        <authorList>
            <person name="Peng H."/>
            <person name="He H."/>
            <person name="Hay J."/>
            <person name="Ruyechan W.T."/>
        </authorList>
    </citation>
    <scope>INTERACTION WITH VARICELLA-ZOSTER VIRUS IE62 PROTEIN (MICROBIAL INFECTION)</scope>
</reference>
<reference key="24">
    <citation type="journal article" date="2004" name="J. Biol. Chem.">
        <title>Fibroblast growth factor-2 represses platelet-derived growth factor receptor-alpha (PDGFR-alpha) transcription via ERK1/2-dependent Sp1 phosphorylation and an atypical cis-acting element in the proximal PDGFR-alpha promoter.</title>
        <authorList>
            <person name="Bonello M.R."/>
            <person name="Khachigian L.M."/>
        </authorList>
    </citation>
    <scope>PHOSPHORYLATION AT THR-453 AND THR-739</scope>
    <scope>FUNCTION</scope>
    <scope>MUTAGENESIS OF THR-453 AND THR-739</scope>
</reference>
<reference key="25">
    <citation type="journal article" date="2005" name="J. Biol. Chem.">
        <title>Transcriptional repression and heterochromatin formation by MBD1 and MCAF/AM family proteins.</title>
        <authorList>
            <person name="Ichimura T."/>
            <person name="Watanabe S."/>
            <person name="Sakamoto Y."/>
            <person name="Aoto T."/>
            <person name="Fujita N."/>
            <person name="Nakao M."/>
        </authorList>
    </citation>
    <scope>INTERACTION WITH ATF7IP AND ATF7IP2</scope>
</reference>
<reference key="26">
    <citation type="journal article" date="2006" name="Cancer Res.">
        <title>DDX3, a DEAD box RNA helicase with tumor growth-suppressive property and transcriptional regulation activity of the p21waf1/cip1 promoter, is a candidate tumor suppressor.</title>
        <authorList>
            <person name="Chao C.H."/>
            <person name="Chen C.M."/>
            <person name="Cheng P.L."/>
            <person name="Shih J.W."/>
            <person name="Tsou A.P."/>
            <person name="Lee Y.H."/>
        </authorList>
    </citation>
    <scope>INTERACTION WITH DDX3X</scope>
</reference>
<reference key="27">
    <citation type="journal article" date="2006" name="J. Biol. Chem.">
        <title>Insulin dynamically regulates calmodulin gene expression by sequential O-glycosylation and phosphorylation of SP1 and its subcellular compartmentalization in liver cells.</title>
        <authorList>
            <person name="Majumdar G."/>
            <person name="Harrington A."/>
            <person name="Hungerford J."/>
            <person name="Martinez-Hernandez A."/>
            <person name="Gerling I.C."/>
            <person name="Raghow R."/>
            <person name="Solomon S."/>
        </authorList>
    </citation>
    <scope>GLYCOSYLATION AT SER-612; THR-640; SER-641; SER-698 AND SER-702</scope>
    <scope>PHOSPHORYLATION AT SER-612; THR-640; SER-641; SER-698 AND SER-702</scope>
    <scope>INDUCTION</scope>
    <scope>SUBCELLULAR LOCATION</scope>
    <scope>IDENTIFICATION BY MASS SPECTROMETRY</scope>
</reference>
<reference key="28">
    <citation type="journal article" date="2006" name="J. Biol. Chem.">
        <title>HER-2/neu represses the metastasis suppressor RECK via ERK and Sp transcription factors to promote cell invasion.</title>
        <authorList>
            <person name="Hsu M.C."/>
            <person name="Chang H.C."/>
            <person name="Hung W.C."/>
        </authorList>
    </citation>
    <scope>PHOSPHORYLATION AT THR-453 AND THR-739</scope>
    <scope>FUNCTION</scope>
</reference>
<reference key="29">
    <citation type="journal article" date="2006" name="J. Biol. Chem.">
        <title>Sumoylation inhibits cleavage of Sp1 N-terminal negative regulatory domain and inhibits Sp1-dependent transcription.</title>
        <authorList>
            <person name="Spengler M.L."/>
            <person name="Brattain M.G."/>
        </authorList>
    </citation>
    <scope>SUMOYLATION AT LYS-16</scope>
    <scope>PROTEOLYTIC PROCESSING</scope>
    <scope>MUTAGENESIS OF LYS-16; GLU-18 AND LYS-19</scope>
</reference>
<reference key="30">
    <citation type="journal article" date="2006" name="J. Mol. Biol.">
        <title>Increased chromatin association of Sp1 in interphase cells by PP2A-mediated dephosphorylations.</title>
        <authorList>
            <person name="Vicart A."/>
            <person name="Lefebvre T."/>
            <person name="Imbert J."/>
            <person name="Fernandez A."/>
            <person name="Kahn-Perles B."/>
        </authorList>
    </citation>
    <scope>PHOSPHORYLATION AT SER-59 AND THR-681</scope>
    <scope>DEPHOSPHORYLATION</scope>
    <scope>GLYCOSYLATION</scope>
    <scope>FUNCTION</scope>
    <scope>MUTAGENESIS OF SER-59; SER-220; THR-355; THR-453; THR-651; THR-681 AND THR-739</scope>
</reference>
<reference key="31">
    <citation type="journal article" date="2006" name="Mol. Cell. Biol.">
        <title>Sp1 deacetylation induced by phorbol ester recruits p300 to activate 12(S)-lipoxygenase gene transcription.</title>
        <authorList>
            <person name="Hung J.J."/>
            <person name="Wang Y.T."/>
            <person name="Chang W.C."/>
        </authorList>
    </citation>
    <scope>ACETYLATION AT LYS-703</scope>
    <scope>INTERACTION WITH HDAC1; EP300 AND JUN</scope>
    <scope>FUNCTION</scope>
    <scope>MUTAGENESIS OF LYS-703</scope>
</reference>
<reference key="32">
    <citation type="journal article" date="2006" name="Mol. Cell. Biol.">
        <title>Phosphatidylinositol 3-kinase/protein kinase Czeta-induced phosphorylation of Sp1 and p107 repressor release have a critical role in histone deacetylase inhibitor-mediated derepression of transcription of the luteinizing hormone receptor gene.</title>
        <authorList>
            <person name="Zhang Y."/>
            <person name="Liao M."/>
            <person name="Dufau M.L."/>
        </authorList>
    </citation>
    <scope>PHOSPHORYLATION AT SER-641</scope>
    <scope>FUNCTION</scope>
    <scope>MUTAGENESIS OF SER-641</scope>
</reference>
<reference key="33">
    <citation type="journal article" date="2006" name="Mol. Cell. Biol.">
        <authorList>
            <person name="Zhang Y."/>
            <person name="Liao M."/>
            <person name="Dufau M.L."/>
        </authorList>
    </citation>
    <scope>ERRATUM OF PUBMED:16943418</scope>
</reference>
<reference key="34">
    <citation type="journal article" date="2006" name="Nat. Biotechnol.">
        <title>A probability-based approach for high-throughput protein phosphorylation analysis and site localization.</title>
        <authorList>
            <person name="Beausoleil S.A."/>
            <person name="Villen J."/>
            <person name="Gerber S.A."/>
            <person name="Rush J."/>
            <person name="Gygi S.P."/>
        </authorList>
    </citation>
    <scope>PHOSPHORYLATION [LARGE SCALE ANALYSIS] AT SER-59</scope>
    <scope>IDENTIFICATION BY MASS SPECTROMETRY [LARGE SCALE ANALYSIS]</scope>
    <source>
        <tissue>Cervix carcinoma</tissue>
    </source>
</reference>
<reference key="35">
    <citation type="journal article" date="2007" name="Mol. Cancer Res.">
        <title>Phosphorylation of Sp1 in response to DNA damage by ataxia telangiectasia-mutated kinase.</title>
        <authorList>
            <person name="Olofsson B.A."/>
            <person name="Kelly C.M."/>
            <person name="Kim J."/>
            <person name="Hornsby S.M."/>
            <person name="Azizkhan-Clifford J."/>
        </authorList>
    </citation>
    <scope>PHOSPHORYLATION AT SER-101</scope>
    <scope>FUNCTION</scope>
    <scope>MUTAGENESIS OF SER-101</scope>
</reference>
<reference key="36">
    <citation type="journal article" date="2008" name="Biochem. Biophys. Res. Commun.">
        <title>Activation of PPARgamma negatively regulates O-GlcNAcylation of Sp1.</title>
        <authorList>
            <person name="Chung S.S."/>
            <person name="Kim J.H."/>
            <person name="Park H.S."/>
            <person name="Choi H.H."/>
            <person name="Lee K.W."/>
            <person name="Cho Y.M."/>
            <person name="Lee H.K."/>
            <person name="Park K.S."/>
        </authorList>
    </citation>
    <scope>GLYCOSYLATION</scope>
    <scope>FUNCTION</scope>
    <scope>MUTAGENESIS OF SER-612; THR-640; SER-641; SER-698 AND SER-702</scope>
</reference>
<reference key="37">
    <citation type="journal article" date="2008" name="Cell Cycle">
        <title>Phosphorylation mediates Sp1 coupled activities of proteolytic processing, desumoylation and degradation.</title>
        <authorList>
            <person name="Spengler M.L."/>
            <person name="Guo L.W."/>
            <person name="Brattain M.G."/>
        </authorList>
    </citation>
    <scope>PHOSPHORYLATION AT SER-7 AND SER-59</scope>
    <scope>SUMOYLATION AT LYS-16</scope>
    <scope>PROTEOLYTIC PROCESSING</scope>
    <scope>UBIQUITINATION</scope>
    <scope>FUNCTION</scope>
    <scope>MUTAGENESIS OF SER-7; SER-59; SER-728 AND SER-732</scope>
</reference>
<reference key="38">
    <citation type="journal article" date="2008" name="Cell. Signal.">
        <title>Identification of phosphorylation sites on transcription factor Sp1 in response to DNA damage and its accumulation at damaged sites.</title>
        <authorList>
            <person name="Iwahori S."/>
            <person name="Yasui Y."/>
            <person name="Kudoh A."/>
            <person name="Sato Y."/>
            <person name="Nakayama S."/>
            <person name="Murata T."/>
            <person name="Isomura H."/>
            <person name="Tsurumi T."/>
        </authorList>
    </citation>
    <scope>PHOSPHORYLATION AT SER-101</scope>
    <scope>FUNCTION</scope>
    <scope>MUTAGENESIS OF SER-36; SER-56; SER-81; SER-85; THR-98; SER-101; THR-250; SER-281; SER-291; SER-296; SER-313; SER-351; THR-394; THR-427 AND SER-431</scope>
</reference>
<reference key="39">
    <citation type="journal article" date="2008" name="Circ. Res.">
        <title>Angiotensin II-inducible platelet-derived growth factor-D transcription requires specific Ser/Thr residues in the second zinc finger region of Sp1.</title>
        <authorList>
            <person name="Tan N.Y."/>
            <person name="Midgley V.C."/>
            <person name="Kavurma M.M."/>
            <person name="Santiago F.S."/>
            <person name="Luo X."/>
            <person name="Peden R."/>
            <person name="Fahmy R.G."/>
            <person name="Berndt M.C."/>
            <person name="Molloy M.P."/>
            <person name="Khachigian L.M."/>
        </authorList>
    </citation>
    <scope>PHOSPHORYLATION AT THR-668; SER-670 AND THR-681</scope>
    <scope>MUTAGENESIS OF THR-668; SER-670 AND THR-681</scope>
</reference>
<reference key="40">
    <citation type="journal article" date="2008" name="Mol. Biol. Cell">
        <title>Phosphorylation by c-Jun NH2-terminal kinase 1 regulates the stability of transcription factor Sp1 during mitosis.</title>
        <authorList>
            <person name="Chuang J.-Y."/>
            <person name="Wang Y.-T."/>
            <person name="Yeh S.-H."/>
            <person name="Liu Y.-W."/>
            <person name="Chang W.-C."/>
            <person name="Hung J.-J."/>
        </authorList>
    </citation>
    <scope>PHOSPHORYLATION AT SER-59 AND THR-278</scope>
    <scope>FUNCTION</scope>
    <scope>SUBCELLULAR LOCATION</scope>
    <scope>MUTAGENESIS OF SER-59; SER-73; THR-117; THR-278 AND THR-739</scope>
</reference>
<reference key="41">
    <citation type="journal article" date="2008" name="Proc. Natl. Acad. Sci. U.S.A.">
        <title>A quantitative atlas of mitotic phosphorylation.</title>
        <authorList>
            <person name="Dephoure N."/>
            <person name="Zhou C."/>
            <person name="Villen J."/>
            <person name="Beausoleil S.A."/>
            <person name="Bakalarski C.E."/>
            <person name="Elledge S.J."/>
            <person name="Gygi S.P."/>
        </authorList>
    </citation>
    <scope>PHOSPHORYLATION [LARGE SCALE ANALYSIS] AT THR-651</scope>
    <scope>IDENTIFICATION BY MASS SPECTROMETRY [LARGE SCALE ANALYSIS]</scope>
    <source>
        <tissue>Cervix carcinoma</tissue>
    </source>
</reference>
<reference key="42">
    <citation type="journal article" date="2009" name="Biochem. Biophys. Res. Commun.">
        <title>O-GlcNAc inhibits interaction between Sp1 and Elf-1 transcription factors.</title>
        <authorList>
            <person name="Lim K."/>
            <person name="Chang H.I."/>
        </authorList>
    </citation>
    <scope>GLYCOSYLATION</scope>
    <scope>INTERACTION WITH ELF1</scope>
</reference>
<reference key="43">
    <citation type="journal article" date="2009" name="Biochem. Biophys. Res. Commun.">
        <title>O-GlcNAcylation of Sp1 interrupts Sp1 interaction with NF-Y.</title>
        <authorList>
            <person name="Lim K."/>
            <person name="Chang H.I."/>
        </authorList>
    </citation>
    <scope>GLYCOSYLATION</scope>
    <scope>INTERACTION WITH NFYA</scope>
</reference>
<reference key="44">
    <citation type="journal article" date="2009" name="J. Biol. Chem.">
        <title>MCAF1/AM is involved in Sp1-mediated maintenance of cancer-associated telomerase activity.</title>
        <authorList>
            <person name="Liu L."/>
            <person name="Ishihara K."/>
            <person name="Ichimura T."/>
            <person name="Fujita N."/>
            <person name="Hino S."/>
            <person name="Tomita S."/>
            <person name="Watanabe S."/>
            <person name="Saitoh N."/>
            <person name="Ito T."/>
            <person name="Nakao M."/>
        </authorList>
    </citation>
    <scope>INTERACTION WITH ATF7IP AND TBP</scope>
</reference>
<reference key="45">
    <citation type="journal article" date="2009" name="J. Virol.">
        <title>O-linked N-acetylglucosaminylation of Sp1 inhibits the human immunodeficiency virus type 1 promoter.</title>
        <authorList>
            <person name="Jochmann R."/>
            <person name="Thurau M."/>
            <person name="Jung S."/>
            <person name="Hofmann C."/>
            <person name="Naschberger E."/>
            <person name="Kremmer E."/>
            <person name="Harrer T."/>
            <person name="Miller M."/>
            <person name="Schaft N."/>
            <person name="Stuerzl M."/>
        </authorList>
    </citation>
    <scope>GLYCOSYLATION</scope>
    <scope>FUNCTION</scope>
</reference>
<reference key="46">
    <citation type="journal article" date="2009" name="Proc. Natl. Acad. Sci. U.S.A.">
        <title>Human BAHD1 promotes heterochromatic gene silencing.</title>
        <authorList>
            <person name="Bierne H."/>
            <person name="Tham T.N."/>
            <person name="Batsche E."/>
            <person name="Dumay A."/>
            <person name="Leguillou M."/>
            <person name="Kerneis-Golsteyn S."/>
            <person name="Regnault B."/>
            <person name="Seeler J.S."/>
            <person name="Muchardt C."/>
            <person name="Feunteun J."/>
            <person name="Cossart P."/>
        </authorList>
    </citation>
    <scope>INTERACTION WITH BAHD1</scope>
</reference>
<reference key="47">
    <citation type="journal article" date="2010" name="FEBS J.">
        <title>Snail associates with EGR-1 and SP-1 to upregulate transcriptional activation of p15INK4b.</title>
        <authorList>
            <person name="Hu C.T."/>
            <person name="Chang T.Y."/>
            <person name="Cheng C.C."/>
            <person name="Liu C.S."/>
            <person name="Wu J.R."/>
            <person name="Li M.C."/>
            <person name="Wu W.S."/>
        </authorList>
    </citation>
    <scope>INTERACTION WITH EGR1</scope>
</reference>
<reference key="48">
    <citation type="journal article" date="2010" name="J. Cell. Biochem.">
        <title>Transcriptional regulation of human FE65, a ligand of Alzheimer's disease amyloid precursor protein, by Sp1.</title>
        <authorList>
            <person name="Yu H.T."/>
            <person name="Chan W.W."/>
            <person name="Chai K.H."/>
            <person name="Lee C.W."/>
            <person name="Chang R.C."/>
            <person name="Yu M.S."/>
            <person name="McLoughlin D.M."/>
            <person name="Miller C.C."/>
            <person name="Lau K.F."/>
        </authorList>
    </citation>
    <scope>FUNCTION</scope>
</reference>
<reference key="49">
    <citation type="journal article" date="2010" name="Sci. Signal.">
        <title>Quantitative phosphoproteomics reveals widespread full phosphorylation site occupancy during mitosis.</title>
        <authorList>
            <person name="Olsen J.V."/>
            <person name="Vermeulen M."/>
            <person name="Santamaria A."/>
            <person name="Kumar C."/>
            <person name="Miller M.L."/>
            <person name="Jensen L.J."/>
            <person name="Gnad F."/>
            <person name="Cox J."/>
            <person name="Jensen T.S."/>
            <person name="Nigg E.A."/>
            <person name="Brunak S."/>
            <person name="Mann M."/>
        </authorList>
    </citation>
    <scope>ACETYLATION [LARGE SCALE ANALYSIS] AT SER-2</scope>
    <scope>PHOSPHORYLATION [LARGE SCALE ANALYSIS] AT SER-2 AND SER-7</scope>
    <scope>CLEAVAGE OF INITIATOR METHIONINE [LARGE SCALE ANALYSIS]</scope>
    <scope>IDENTIFICATION BY MASS SPECTROMETRY [LARGE SCALE ANALYSIS]</scope>
    <source>
        <tissue>Cervix carcinoma</tissue>
    </source>
</reference>
<reference key="50">
    <citation type="journal article" date="2011" name="BMC Syst. Biol.">
        <title>Initial characterization of the human central proteome.</title>
        <authorList>
            <person name="Burkard T.R."/>
            <person name="Planyavsky M."/>
            <person name="Kaupe I."/>
            <person name="Breitwieser F.P."/>
            <person name="Buerckstuemmer T."/>
            <person name="Bennett K.L."/>
            <person name="Superti-Furga G."/>
            <person name="Colinge J."/>
        </authorList>
    </citation>
    <scope>IDENTIFICATION BY MASS SPECTROMETRY [LARGE SCALE ANALYSIS]</scope>
</reference>
<reference key="51">
    <citation type="journal article" date="2011" name="Cell. Mol. Life Sci.">
        <title>Transforming growth factor-beta-inducible early response gene 1 is a novel substrate for atypical protein kinase Cs.</title>
        <authorList>
            <person name="Alemu E.A."/>
            <person name="Sjoettem E."/>
            <person name="Outzen H."/>
            <person name="Larsen K.B."/>
            <person name="Holm T."/>
            <person name="Bjoerkoey G."/>
            <person name="Johansen T."/>
        </authorList>
    </citation>
    <scope>PHOSPHORYLATION AT SER-702</scope>
</reference>
<reference key="52">
    <citation type="journal article" date="2011" name="Mol. Cell. Biol.">
        <title>Cooperative transcriptional activation by Klf4, Meis2, and Pbx1.</title>
        <authorList>
            <person name="Bjerke G.A."/>
            <person name="Hyman-Walsh C."/>
            <person name="Wotton D."/>
        </authorList>
    </citation>
    <scope>INTERACTION WITH MEIS2 AND PBX1</scope>
</reference>
<reference key="53">
    <citation type="journal article" date="2011" name="Mol. Genet. Genomics">
        <title>Mithramycin A suppresses expression of the human melanoma-associated gene ABCB8.</title>
        <authorList>
            <person name="Sachrajda I."/>
            <person name="Ratajewski M."/>
        </authorList>
    </citation>
    <scope>FUNCTION</scope>
</reference>
<reference key="54">
    <citation type="journal article" date="2011" name="Sci. Signal.">
        <title>System-wide temporal characterization of the proteome and phosphoproteome of human embryonic stem cell differentiation.</title>
        <authorList>
            <person name="Rigbolt K.T."/>
            <person name="Prokhorova T.A."/>
            <person name="Akimov V."/>
            <person name="Henningsen J."/>
            <person name="Johansen P.T."/>
            <person name="Kratchmarova I."/>
            <person name="Kassem M."/>
            <person name="Mann M."/>
            <person name="Olsen J.V."/>
            <person name="Blagoev B."/>
        </authorList>
    </citation>
    <scope>ACETYLATION [LARGE SCALE ANALYSIS] AT SER-2</scope>
    <scope>PHOSPHORYLATION [LARGE SCALE ANALYSIS] AT SER-7</scope>
    <scope>CLEAVAGE OF INITIATOR METHIONINE [LARGE SCALE ANALYSIS]</scope>
    <scope>IDENTIFICATION BY MASS SPECTROMETRY [LARGE SCALE ANALYSIS]</scope>
</reference>
<reference key="55">
    <citation type="journal article" date="2013" name="J. Proteome Res.">
        <title>Toward a comprehensive characterization of a human cancer cell phosphoproteome.</title>
        <authorList>
            <person name="Zhou H."/>
            <person name="Di Palma S."/>
            <person name="Preisinger C."/>
            <person name="Peng M."/>
            <person name="Polat A.N."/>
            <person name="Heck A.J."/>
            <person name="Mohammed S."/>
        </authorList>
    </citation>
    <scope>PHOSPHORYLATION [LARGE SCALE ANALYSIS] AT SER-2; SER-7 AND SER-59</scope>
    <scope>IDENTIFICATION BY MASS SPECTROMETRY [LARGE SCALE ANALYSIS]</scope>
    <source>
        <tissue>Cervix carcinoma</tissue>
        <tissue>Erythroleukemia</tissue>
    </source>
</reference>
<reference key="56">
    <citation type="journal article" date="2014" name="Nat. Struct. Mol. Biol.">
        <title>Uncovering global SUMOylation signaling networks in a site-specific manner.</title>
        <authorList>
            <person name="Hendriks I.A."/>
            <person name="D'Souza R.C."/>
            <person name="Yang B."/>
            <person name="Verlaan-de Vries M."/>
            <person name="Mann M."/>
            <person name="Vertegaal A.C."/>
        </authorList>
    </citation>
    <scope>SUMOYLATION [LARGE SCALE ANALYSIS] AT LYS-16</scope>
    <scope>IDENTIFICATION BY MASS SPECTROMETRY [LARGE SCALE ANALYSIS]</scope>
</reference>
<reference key="57">
    <citation type="journal article" date="2017" name="Nat. Struct. Mol. Biol.">
        <title>Site-specific mapping of the human SUMO proteome reveals co-modification with phosphorylation.</title>
        <authorList>
            <person name="Hendriks I.A."/>
            <person name="Lyon D."/>
            <person name="Young C."/>
            <person name="Jensen L.J."/>
            <person name="Vertegaal A.C."/>
            <person name="Nielsen M.L."/>
        </authorList>
    </citation>
    <scope>SUMOYLATION [LARGE SCALE ANALYSIS] AT LYS-16</scope>
    <scope>IDENTIFICATION BY MASS SPECTROMETRY [LARGE SCALE ANALYSIS]</scope>
</reference>
<reference key="58">
    <citation type="journal article" date="2020" name="Cell. Mol. Life Sci.">
        <title>The evolution of the 9aaTAD domain in Sp2 proteins: inactivation with valines and intron reservoirs.</title>
        <authorList>
            <person name="Piskacek M."/>
            <person name="Havelka M."/>
            <person name="Jendruchova K."/>
            <person name="Knight A."/>
            <person name="Keegan L.P."/>
        </authorList>
    </citation>
    <scope>9AATAD MOTIF</scope>
</reference>
<reference key="59">
    <citation type="journal article" date="2024" name="Cells">
        <title>HDAC6 Enhances Endoglin Expression through Deacetylation of Transcription Factor SP1, Potentiating BMP9-Induced Angiogenesis.</title>
        <authorList>
            <person name="Sun C."/>
            <person name="Xie K."/>
            <person name="Yang L."/>
            <person name="Cai S."/>
            <person name="Wang M."/>
            <person name="Zhu Y."/>
            <person name="Tao B."/>
            <person name="Zhu Y."/>
        </authorList>
    </citation>
    <scope>ACETYLATION</scope>
    <scope>DEACETYLATION BY HDAC6</scope>
</reference>
<reference key="60">
    <citation type="journal article" date="1997" name="J. Biol. Chem.">
        <title>Structures of zinc finger domains from transcription factor Sp1. Insights into sequence-specific protein-DNA recognition.</title>
        <authorList>
            <person name="Narayan V.A."/>
            <person name="Kriwacki R.W."/>
            <person name="Caradonna J.P."/>
        </authorList>
    </citation>
    <scope>STRUCTURE BY NMR OF 654-684 AND 684-712</scope>
</reference>
<name>SP1_HUMAN</name>
<accession>P08047</accession>
<accession>E4Z9M7</accession>
<accession>G5E9M8</accession>
<accession>Q86TN8</accession>
<accession>Q9H3Q5</accession>
<accession>Q9NR51</accession>
<accession>Q9NY21</accession>
<accession>Q9NYE7</accession>
<sequence length="785" mass="80693">MSDQDHSMDEMTAVVKIEKGVGGNNGGNGNGGGAFSQARSSSTGSSSSTGGGGQESQPSPLALLAATCSRIESPNENSNNSQGPSQSGGTGELDLTATQLSQGANGWQIISSSSGATPTSKEQSGSSTNGSNGSESSKNRTVSGGQYVVAAAPNLQNQQVLTGLPGVMPNIQYQVIPQFQTVDGQQLQFAATGAQVQQDGSGQIQIIPGANQQIITNRGSGGNIIAAMPNLLQQAVPLQGLANNVLSGQTQYVTNVPVALNGNITLLPVNSVSAATLTPSSQAVTISSSGSQESGSQPVTSGTTISSASLVSSQASSSSFFTNANSYSTTTTTSNMGIMNFTTSGSSGTNSQGQTPQRVSGLQGSDALNIQQNQTSGGSLQAGQQKEGEQNQQTQQQQILIQPQLVQGGQALQALQAAPLSGQTFTTQAISQETLQNLQLQAVPNSGPIIIRTPTVGPNGQVSWQTLQLQNLQVQNPQAQTITLAPMQGVSLGQTSSSNTTLTPIASAASIPAGTVTVNAAQLSSMPGLQTINLSALGTSGIQVHPIQGLPLAIANAPGDHGAQLGLHGAGGDGIHDDTAGGEEGENSPDAQPQAGRRTRREACTCPYCKDSEGRGSGDPGKKKQHICHIQGCGKVYGKTSHLRAHLRWHTGERPFMCTWSYCGKRFTRSDELQRHKRTHTGEKKFACPECPKRFMRSDHLSKHIKTHQNKKGGPGVALSVGTLPLDSGAGSEGSGTATPSALITTNMVAMEAICPEGIARLANSGINVMQVADLQSINISGNGF</sequence>
<organism>
    <name type="scientific">Homo sapiens</name>
    <name type="common">Human</name>
    <dbReference type="NCBI Taxonomy" id="9606"/>
    <lineage>
        <taxon>Eukaryota</taxon>
        <taxon>Metazoa</taxon>
        <taxon>Chordata</taxon>
        <taxon>Craniata</taxon>
        <taxon>Vertebrata</taxon>
        <taxon>Euteleostomi</taxon>
        <taxon>Mammalia</taxon>
        <taxon>Eutheria</taxon>
        <taxon>Euarchontoglires</taxon>
        <taxon>Primates</taxon>
        <taxon>Haplorrhini</taxon>
        <taxon>Catarrhini</taxon>
        <taxon>Hominidae</taxon>
        <taxon>Homo</taxon>
    </lineage>
</organism>
<comment type="function">
    <text evidence="1 2 5 7 8 13 16 18 20 21 22 23 24 26 27 29 33 35 37">Transcription factor that can activate or repress transcription in response to physiological and pathological stimuli. Binds with high affinity to GC-rich motifs and regulates the expression of a large number of genes involved in a variety of processes such as cell growth, apoptosis, differentiation and immune responses. Highly regulated by post-translational modifications (phosphorylations, sumoylation, proteolytic cleavage, glycosylation and acetylation). Also binds the PDGFR-alpha G-box promoter. May have a role in modulating the cellular response to DNA damage. Implicated in chromatin remodeling. Plays an essential role in the regulation of FE65 gene expression. In complex with ATF7IP, maintains telomerase activity in cancer cells by inducing TERT and TERC gene expression. Isoform 3 is a stronger activator of transcription than isoform 1. Positively regulates the transcription of the core clock component BMAL1 (PubMed:10391891, PubMed:11371615, PubMed:11904305, PubMed:14593115, PubMed:16377629, PubMed:16478997, PubMed:16943418, PubMed:17049555, PubMed:18171990, PubMed:18199680, PubMed:18239466, PubMed:18513490, PubMed:18619531, PubMed:19193796, PubMed:20091743, PubMed:21046154, PubMed:21798247). Plays a role in the recruitment of SMARCA4/BRG1 on the c-FOS promoter. Plays a role in protecting cells against oxidative stress following brain injury by regulating the expression of RNF112 (By similarity).</text>
</comment>
<comment type="subunit">
    <text evidence="1 2 5 6 9 11 14 18 19 28 30 31 32 34 36">Interacts with ATF7IP, ATF7IP2, BAHD1, POGZ, HCFC1, AATF and PHC2. Interacts with HLTF; the interaction may be required for basal transcriptional activity of HLTF. Interacts (deacetylated form) with EP300; the interaction enhances gene expression. Interacts with HDAC1 and JUN. Interacts with ELF1; the interaction is inhibited by glycosylation of SP1. Interaction with NFYA; the interaction is inhibited by glycosylation of SP1. Interacts with ATF7IP and TBP. Interacts with MEIS2 isoform 4 and PBX1 isoform PBX1a. Interacts with EGR1 (PubMed:10391891, PubMed:10976766, PubMed:12021324, PubMed:12847090, PubMed:12855699, PubMed:15691849, PubMed:16478997, PubMed:19106100, PubMed:19285002, PubMed:19302979, PubMed:19666599, PubMed:20121949, PubMed:21746878, PubMed:7592727, PubMed:9466902). Interacts with SMARCA4/BRG1. Interacts with RNF112 in an oxidative stress-regulated manner (By similarity). Interacts with ZBTB7A; ZBTB7A prevents the binding to GC-rich motifs in promoters and represses the transcriptional activity of SP1 (PubMed:12004059). Interacts with DDX3X; this interaction potentiates SP1-induced CDKN1A/WAF1/CIP1 transcription (PubMed:16818630). Interacts with MSX1; the interaction may inhibit MSX1 autoinactivation (By similarity).</text>
</comment>
<comment type="subunit">
    <text evidence="12">(Microbial infection) Interacts with varicella-zoster virus IE62 protein.</text>
</comment>
<comment type="subunit">
    <text evidence="10 42">(Microbial infection) Interacts with SV40 VP2/3 proteins. Interacts with SV40 major capsid protein VP1; this interaction leads to a cooperativity between the 2 proteins in DNA binding.</text>
</comment>
<comment type="subunit">
    <text evidence="40">(Microbial infection) Interacts with HIV-1 Vpr; the interaction is inhibited by SP1 O-glycosylation.</text>
</comment>
<comment type="interaction">
    <interactant intactId="EBI-298336">
        <id>P08047</id>
    </interactant>
    <interactant intactId="EBI-372428">
        <id>Q9NY61</id>
        <label>AATF</label>
    </interactant>
    <organismsDiffer>false</organismsDiffer>
    <experiments>2</experiments>
</comment>
<comment type="interaction">
    <interactant intactId="EBI-298336">
        <id>P08047</id>
    </interactant>
    <interactant intactId="EBI-625922">
        <id>Q8N726</id>
        <label>CDKN2A</label>
    </interactant>
    <organismsDiffer>false</organismsDiffer>
    <experiments>4</experiments>
</comment>
<comment type="interaction">
    <interactant intactId="EBI-298336">
        <id>P08047</id>
    </interactant>
    <interactant intactId="EBI-1752755">
        <id>Q92988</id>
        <label>DLX4</label>
    </interactant>
    <organismsDiffer>false</organismsDiffer>
    <experiments>4</experiments>
</comment>
<comment type="interaction">
    <interactant intactId="EBI-298336">
        <id>P08047</id>
    </interactant>
    <interactant intactId="EBI-448924">
        <id>Q01094</id>
        <label>E2F1</label>
    </interactant>
    <organismsDiffer>false</organismsDiffer>
    <experiments>2</experiments>
</comment>
<comment type="interaction">
    <interactant intactId="EBI-298336">
        <id>P08047</id>
    </interactant>
    <interactant intactId="EBI-765526">
        <id>P32519</id>
        <label>ELF1</label>
    </interactant>
    <organismsDiffer>false</organismsDiffer>
    <experiments>2</experiments>
</comment>
<comment type="interaction">
    <interactant intactId="EBI-298336">
        <id>P08047</id>
    </interactant>
    <interactant intactId="EBI-447470">
        <id>Q99814</id>
        <label>EPAS1</label>
    </interactant>
    <organismsDiffer>false</organismsDiffer>
    <experiments>2</experiments>
</comment>
<comment type="interaction">
    <interactant intactId="EBI-298336">
        <id>P08047</id>
    </interactant>
    <interactant intactId="EBI-78473">
        <id>P03372</id>
        <label>ESR1</label>
    </interactant>
    <organismsDiffer>false</organismsDiffer>
    <experiments>2</experiments>
</comment>
<comment type="interaction">
    <interactant intactId="EBI-298336">
        <id>P08047</id>
    </interactant>
    <interactant intactId="EBI-701903">
        <id>Q14192</id>
        <label>FHL2</label>
    </interactant>
    <organismsDiffer>false</organismsDiffer>
    <experiments>3</experiments>
</comment>
<comment type="interaction">
    <interactant intactId="EBI-298336">
        <id>P08047</id>
    </interactant>
    <interactant intactId="EBI-396176">
        <id>P51610</id>
        <label>HCFC1</label>
    </interactant>
    <organismsDiffer>false</organismsDiffer>
    <experiments>4</experiments>
</comment>
<comment type="interaction">
    <interactant intactId="EBI-298336">
        <id>P08047</id>
    </interactant>
    <interactant intactId="EBI-301834">
        <id>Q13547</id>
        <label>HDAC1</label>
    </interactant>
    <organismsDiffer>false</organismsDiffer>
    <experiments>2</experiments>
</comment>
<comment type="interaction">
    <interactant intactId="EBI-298336">
        <id>P08047</id>
    </interactant>
    <interactant intactId="EBI-447269">
        <id>Q16665</id>
        <label>HIF1A</label>
    </interactant>
    <organismsDiffer>false</organismsDiffer>
    <experiments>3</experiments>
</comment>
<comment type="interaction">
    <interactant intactId="EBI-298336">
        <id>P08047</id>
    </interactant>
    <interactant intactId="EBI-1389509">
        <id>Q13118</id>
        <label>KLF10</label>
    </interactant>
    <organismsDiffer>false</organismsDiffer>
    <experiments>2</experiments>
</comment>
<comment type="interaction">
    <interactant intactId="EBI-298336">
        <id>P08047</id>
    </interactant>
    <interactant intactId="EBI-447544">
        <id>P01106</id>
        <label>MYC</label>
    </interactant>
    <organismsDiffer>false</organismsDiffer>
    <experiments>4</experiments>
</comment>
<comment type="interaction">
    <interactant intactId="EBI-298336">
        <id>P08047</id>
    </interactant>
    <interactant intactId="EBI-389883">
        <id>P16333</id>
        <label>NCK1</label>
    </interactant>
    <organismsDiffer>false</organismsDiffer>
    <experiments>2</experiments>
</comment>
<comment type="interaction">
    <interactant intactId="EBI-298336">
        <id>P08047</id>
    </interactant>
    <interactant intactId="EBI-713786">
        <id>Q8IXK0</id>
        <label>PHC2</label>
    </interactant>
    <organismsDiffer>false</organismsDiffer>
    <experiments>2</experiments>
</comment>
<comment type="interaction">
    <interactant intactId="EBI-298336">
        <id>P08047</id>
    </interactant>
    <interactant intactId="EBI-1389308">
        <id>Q7Z3K3</id>
        <label>POGZ</label>
    </interactant>
    <organismsDiffer>false</organismsDiffer>
    <experiments>2</experiments>
</comment>
<comment type="interaction">
    <interactant intactId="EBI-298336">
        <id>P08047</id>
    </interactant>
    <interactant intactId="EBI-624770">
        <id>P14859</id>
        <label>POU2F1</label>
    </interactant>
    <organismsDiffer>false</organismsDiffer>
    <experiments>7</experiments>
</comment>
<comment type="interaction">
    <interactant intactId="EBI-298336">
        <id>P08047</id>
    </interactant>
    <interactant intactId="EBI-743342">
        <id>Q06455</id>
        <label>RUNX1T1</label>
    </interactant>
    <organismsDiffer>false</organismsDiffer>
    <experiments>2</experiments>
</comment>
<comment type="interaction">
    <interactant intactId="EBI-298336">
        <id>P08047</id>
    </interactant>
    <interactant intactId="EBI-1054743">
        <id>Q15459</id>
        <label>SF3A1</label>
    </interactant>
    <organismsDiffer>false</organismsDiffer>
    <experiments>2</experiments>
</comment>
<comment type="interaction">
    <interactant intactId="EBI-298336">
        <id>P08047</id>
    </interactant>
    <interactant intactId="EBI-347263">
        <id>Q13485</id>
        <label>SMAD4</label>
    </interactant>
    <organismsDiffer>false</organismsDiffer>
    <experiments>2</experiments>
</comment>
<comment type="interaction">
    <interactant intactId="EBI-298336">
        <id>P08047</id>
    </interactant>
    <interactant intactId="EBI-298336">
        <id>P08047</id>
        <label>SP1</label>
    </interactant>
    <organismsDiffer>false</organismsDiffer>
    <experiments>2</experiments>
</comment>
<comment type="interaction">
    <interactant intactId="EBI-298336">
        <id>P08047</id>
    </interactant>
    <interactant intactId="EBI-465059">
        <id>Q12772</id>
        <label>SREBF2</label>
    </interactant>
    <organismsDiffer>false</organismsDiffer>
    <experiments>3</experiments>
</comment>
<comment type="interaction">
    <interactant intactId="EBI-298336">
        <id>P08047</id>
    </interactant>
    <interactant intactId="EBI-518675">
        <id>P40763</id>
        <label>STAT3</label>
    </interactant>
    <organismsDiffer>false</organismsDiffer>
    <experiments>4</experiments>
</comment>
<comment type="interaction">
    <interactant intactId="EBI-298336">
        <id>P08047</id>
    </interactant>
    <interactant intactId="EBI-3922312">
        <id>Q9UL17</id>
        <label>TBX21</label>
    </interactant>
    <organismsDiffer>false</organismsDiffer>
    <experiments>4</experiments>
</comment>
<comment type="interaction">
    <interactant intactId="EBI-298336">
        <id>P08047</id>
    </interactant>
    <interactant intactId="EBI-366083">
        <id>P04637</id>
        <label>TP53</label>
    </interactant>
    <organismsDiffer>false</organismsDiffer>
    <experiments>3</experiments>
</comment>
<comment type="interaction">
    <interactant intactId="EBI-298336">
        <id>P08047</id>
    </interactant>
    <interactant intactId="EBI-2515601">
        <id>Q8N680</id>
        <label>ZBTB2</label>
    </interactant>
    <organismsDiffer>false</organismsDiffer>
    <experiments>4</experiments>
</comment>
<comment type="interaction">
    <interactant intactId="EBI-298336">
        <id>P08047</id>
    </interactant>
    <interactant intactId="EBI-862337">
        <id>P23708</id>
        <label>Nfya</label>
    </interactant>
    <organismsDiffer>true</organismsDiffer>
    <experiments>18</experiments>
</comment>
<comment type="subcellular location">
    <subcellularLocation>
        <location>Nucleus</location>
    </subcellularLocation>
    <subcellularLocation>
        <location>Cytoplasm</location>
    </subcellularLocation>
    <text>Nuclear location is governed by glycosylated/phosphorylated states. Insulin promotes nuclear location, while glucagon favors cytoplasmic location.</text>
</comment>
<comment type="alternative products">
    <event type="alternative splicing"/>
    <isoform>
        <id>P08047-1</id>
        <name>1</name>
        <name>Sp1a</name>
        <sequence type="displayed"/>
    </isoform>
    <isoform>
        <id>P08047-2</id>
        <name>2</name>
        <name>Sp1b</name>
        <sequence type="described" ref="VSP_053934"/>
    </isoform>
    <isoform>
        <id>P08047-3</id>
        <name>3</name>
        <name>Sp1c</name>
        <sequence type="described" ref="VSP_053935"/>
    </isoform>
</comment>
<comment type="tissue specificity">
    <text evidence="37">Up-regulated in adenocarcinomas of the stomach (at protein level). Isoform 3 is ubiquitously expressed at low levels.</text>
</comment>
<comment type="induction">
    <text evidence="15">By insulin.</text>
</comment>
<comment type="domain">
    <text evidence="38">The 9aaTAD motif is a transactivation domain present in a large number of yeast and animal transcription factors.</text>
</comment>
<comment type="PTM">
    <text evidence="8 13 15 16 20 21 22 23 24 25 27">Phosphorylated on multiple serine and threonine residues. Phosphorylation is coupled to ubiquitination, sumoylation and proteolytic processing. Phosphorylation on Ser-59 enhances proteolytic cleavage. Phosphorylation on Ser-7 enhances ubiquitination and protein degradation. Hyperphosphorylation on Ser-101 in response to DNA damage has no effect on transcriptional activity. MAPK1/MAPK3-mediated phosphorylation on Thr-453 and Thr-739 enhances VEGF transcription but, represses FGF2-triggered PDGFR-alpha transcription. Also implicated in the repression of RECK by ERBB2. Hyperphosphorylated on Thr-278 and Thr-739 during mitosis by MAPK8 shielding SP1 from degradation by the ubiquitin-dependent pathway. Phosphorylated in the zinc-finger domain by calmodulin-activated PKCzeta. Phosphorylation on Ser-641 by PKCzeta is critical for TSA-activated LHR gene expression through release of its repressor, p107. Phosphorylation on Thr-668, Ser-670 and Thr-681 is stimulated by angiotensin II via the AT1 receptor inducing increased binding to the PDGF-D promoter. This phosphorylation is increased in injured artey wall. Ser-59 and Thr-681 can both be dephosphorylated by PP2A during cell-cycle interphase. Dephosphorylation on Ser-59 leads to increased chromatin association during interphase and increases the transcriptional activity. On insulin stimulation, sequentially glycosylated and phosphorylated on several C-terminal serine and threonine residues.</text>
</comment>
<comment type="PTM">
    <text evidence="18 39">Acetylated (PubMed:16478997, PubMed:38534334). Acetylation/deacetylation events affect transcriptional activity (PubMed:16478997, PubMed:38534334). Deacetylation leads to an increase in the expression of the 12(s)-lipooxygenase gene through recruitment of p300 to the promoter (PubMed:16478997). Deacetylated by HDAC6 which leads to increased expression of ENG and positive regulation of angiogenesis (PubMed:38534334).</text>
</comment>
<comment type="PTM">
    <text evidence="24">Ubiquitinated. Ubiquitination occurs on the C-terminal proteolytically-cleaved peptide and is triggered by phosphorylation.</text>
</comment>
<comment type="PTM">
    <text>Sumoylated with SUMO1. Sumoylation modulates proteolytic cleavage of the N-terminal repressor domain. Sumoylation levels are attenuated during tumorigenesis. Phosphorylation mediates SP1 desumoylation.</text>
</comment>
<comment type="PTM">
    <text>Proteolytic cleavage in the N-terminal repressor domain is prevented by sumoylation. The C-terminal cleaved product is susceptible to degradation.</text>
</comment>
<comment type="PTM">
    <text>O-glycosylated; Contains 8 N-acetylglucosamine side chains. Levels are controlled by insulin and the SP1 phosphorylation states. Insulin-mediated O-glycosylation locates SP1 to the nucleus, where it is sequentially deglycosylated and phosphorylated. O-glycosylation affects transcriptional activity through disrupting the interaction with a number of transcription factors including ELF1 and NFYA. Also inhibits interaction with the HIV1 promoter. Inhibited by peroxisomome proliferator receptor gamma (PPARgamma).</text>
</comment>
<comment type="miscellaneous">
    <text>In the hepatoma cell line Hep-G2, SP1 precursor mRNA may undergo homotype trans-splicing leading to the duplication of exons 2 and 3.</text>
</comment>
<comment type="similarity">
    <text evidence="44">Belongs to the Sp1 C2H2-type zinc-finger protein family.</text>
</comment>
<comment type="sequence caution" evidence="44">
    <conflict type="erroneous initiation">
        <sequence resource="EMBL-CDS" id="AAH43224"/>
    </conflict>
    <text>Extended N-terminus.</text>
</comment>
<gene>
    <name type="primary">SP1</name>
    <name type="synonym">TSFP1</name>
</gene>
<keyword id="KW-0002">3D-structure</keyword>
<keyword id="KW-0007">Acetylation</keyword>
<keyword id="KW-0010">Activator</keyword>
<keyword id="KW-0025">Alternative splicing</keyword>
<keyword id="KW-0090">Biological rhythms</keyword>
<keyword id="KW-0963">Cytoplasm</keyword>
<keyword id="KW-0903">Direct protein sequencing</keyword>
<keyword id="KW-0238">DNA-binding</keyword>
<keyword id="KW-0325">Glycoprotein</keyword>
<keyword id="KW-0945">Host-virus interaction</keyword>
<keyword id="KW-1017">Isopeptide bond</keyword>
<keyword id="KW-0479">Metal-binding</keyword>
<keyword id="KW-0539">Nucleus</keyword>
<keyword id="KW-0597">Phosphoprotein</keyword>
<keyword id="KW-1267">Proteomics identification</keyword>
<keyword id="KW-1185">Reference proteome</keyword>
<keyword id="KW-0677">Repeat</keyword>
<keyword id="KW-0678">Repressor</keyword>
<keyword id="KW-0804">Transcription</keyword>
<keyword id="KW-0805">Transcription regulation</keyword>
<keyword id="KW-0832">Ubl conjugation</keyword>
<keyword id="KW-0862">Zinc</keyword>
<keyword id="KW-0863">Zinc-finger</keyword>
<proteinExistence type="evidence at protein level"/>
<dbReference type="EMBL" id="FN908228">
    <property type="protein sequence ID" value="CBM42955.1"/>
    <property type="molecule type" value="mRNA"/>
</dbReference>
<dbReference type="EMBL" id="AC068889">
    <property type="status" value="NOT_ANNOTATED_CDS"/>
    <property type="molecule type" value="Genomic_DNA"/>
</dbReference>
<dbReference type="EMBL" id="AC073611">
    <property type="status" value="NOT_ANNOTATED_CDS"/>
    <property type="molecule type" value="Genomic_DNA"/>
</dbReference>
<dbReference type="EMBL" id="CH471054">
    <property type="protein sequence ID" value="EAW96699.1"/>
    <property type="molecule type" value="Genomic_DNA"/>
</dbReference>
<dbReference type="EMBL" id="BC043224">
    <property type="protein sequence ID" value="AAH43224.1"/>
    <property type="status" value="ALT_INIT"/>
    <property type="molecule type" value="mRNA"/>
</dbReference>
<dbReference type="EMBL" id="BC062539">
    <property type="protein sequence ID" value="AAH62539.1"/>
    <property type="molecule type" value="mRNA"/>
</dbReference>
<dbReference type="EMBL" id="AF252284">
    <property type="protein sequence ID" value="AAF67726.1"/>
    <property type="molecule type" value="mRNA"/>
</dbReference>
<dbReference type="EMBL" id="AB039286">
    <property type="protein sequence ID" value="BAB13476.1"/>
    <property type="molecule type" value="Genomic_DNA"/>
</dbReference>
<dbReference type="EMBL" id="J03133">
    <property type="protein sequence ID" value="AAA61154.1"/>
    <property type="molecule type" value="mRNA"/>
</dbReference>
<dbReference type="EMBL" id="AF255682">
    <property type="protein sequence ID" value="AAF78781.1"/>
    <property type="molecule type" value="mRNA"/>
</dbReference>
<dbReference type="EMBL" id="AJ272134">
    <property type="protein sequence ID" value="CAB75345.1"/>
    <property type="molecule type" value="mRNA"/>
</dbReference>
<dbReference type="CCDS" id="CCDS44898.1">
    <molecule id="P08047-2"/>
</dbReference>
<dbReference type="CCDS" id="CCDS8857.1">
    <molecule id="P08047-1"/>
</dbReference>
<dbReference type="PIR" id="A29635">
    <property type="entry name" value="A29635"/>
</dbReference>
<dbReference type="RefSeq" id="NP_001238754.1">
    <molecule id="P08047-3"/>
    <property type="nucleotide sequence ID" value="NM_001251825.2"/>
</dbReference>
<dbReference type="RefSeq" id="NP_003100.1">
    <molecule id="P08047-2"/>
    <property type="nucleotide sequence ID" value="NM_003109.1"/>
</dbReference>
<dbReference type="RefSeq" id="NP_612482.2">
    <molecule id="P08047-1"/>
    <property type="nucleotide sequence ID" value="NM_138473.2"/>
</dbReference>
<dbReference type="RefSeq" id="XP_011536998.1">
    <property type="nucleotide sequence ID" value="XM_011538696.2"/>
</dbReference>
<dbReference type="PDB" id="1SP1">
    <property type="method" value="NMR"/>
    <property type="chains" value="A=684-712"/>
</dbReference>
<dbReference type="PDB" id="1SP2">
    <property type="method" value="NMR"/>
    <property type="chains" value="A=654-684"/>
</dbReference>
<dbReference type="PDB" id="1VA1">
    <property type="method" value="NMR"/>
    <property type="chains" value="A=619-654"/>
</dbReference>
<dbReference type="PDB" id="1VA2">
    <property type="method" value="NMR"/>
    <property type="chains" value="A=654-684"/>
</dbReference>
<dbReference type="PDB" id="1VA3">
    <property type="method" value="NMR"/>
    <property type="chains" value="A=684-712"/>
</dbReference>
<dbReference type="PDB" id="6PV0">
    <property type="method" value="NMR"/>
    <property type="chains" value="A=654-684"/>
</dbReference>
<dbReference type="PDB" id="6PV1">
    <property type="method" value="NMR"/>
    <property type="chains" value="A=654-684"/>
</dbReference>
<dbReference type="PDB" id="6PV2">
    <property type="method" value="NMR"/>
    <property type="chains" value="A=654-684"/>
</dbReference>
<dbReference type="PDB" id="6PV3">
    <property type="method" value="NMR"/>
    <property type="chains" value="A=655-684"/>
</dbReference>
<dbReference type="PDB" id="6UCO">
    <property type="method" value="NMR"/>
    <property type="chains" value="A=654-684"/>
</dbReference>
<dbReference type="PDB" id="6UCP">
    <property type="method" value="NMR"/>
    <property type="chains" value="A=654-684"/>
</dbReference>
<dbReference type="PDBsum" id="1SP1"/>
<dbReference type="PDBsum" id="1SP2"/>
<dbReference type="PDBsum" id="1VA1"/>
<dbReference type="PDBsum" id="1VA2"/>
<dbReference type="PDBsum" id="1VA3"/>
<dbReference type="PDBsum" id="6PV0"/>
<dbReference type="PDBsum" id="6PV1"/>
<dbReference type="PDBsum" id="6PV2"/>
<dbReference type="PDBsum" id="6PV3"/>
<dbReference type="PDBsum" id="6UCO"/>
<dbReference type="PDBsum" id="6UCP"/>
<dbReference type="BMRB" id="P08047"/>
<dbReference type="SMR" id="P08047"/>
<dbReference type="BioGRID" id="112550">
    <property type="interactions" value="347"/>
</dbReference>
<dbReference type="CORUM" id="P08047"/>
<dbReference type="DIP" id="DIP-36N"/>
<dbReference type="ELM" id="P08047"/>
<dbReference type="FunCoup" id="P08047">
    <property type="interactions" value="4420"/>
</dbReference>
<dbReference type="IntAct" id="P08047">
    <property type="interactions" value="127"/>
</dbReference>
<dbReference type="MINT" id="P08047"/>
<dbReference type="STRING" id="9606.ENSP00000329357"/>
<dbReference type="BindingDB" id="P08047"/>
<dbReference type="ChEMBL" id="CHEMBL6103"/>
<dbReference type="DrugBank" id="DB12226">
    <property type="generic name" value="Terameprocol"/>
</dbReference>
<dbReference type="GlyConnect" id="605">
    <property type="glycosylation" value="1 O-GlcNAc glycan"/>
</dbReference>
<dbReference type="GlyCosmos" id="P08047">
    <property type="glycosylation" value="25 sites, 2 glycans"/>
</dbReference>
<dbReference type="GlyGen" id="P08047">
    <property type="glycosylation" value="27 sites, 2 O-linked glycans (26 sites)"/>
</dbReference>
<dbReference type="iPTMnet" id="P08047"/>
<dbReference type="PhosphoSitePlus" id="P08047"/>
<dbReference type="BioMuta" id="SP1"/>
<dbReference type="DMDM" id="13638437"/>
<dbReference type="jPOST" id="P08047"/>
<dbReference type="MassIVE" id="P08047"/>
<dbReference type="PaxDb" id="9606-ENSP00000329357"/>
<dbReference type="PeptideAtlas" id="P08047"/>
<dbReference type="ProteomicsDB" id="33987"/>
<dbReference type="ProteomicsDB" id="52061">
    <molecule id="P08047-1"/>
</dbReference>
<dbReference type="Pumba" id="P08047"/>
<dbReference type="Antibodypedia" id="892">
    <property type="antibodies" value="1092 antibodies from 47 providers"/>
</dbReference>
<dbReference type="DNASU" id="6667"/>
<dbReference type="Ensembl" id="ENST00000327443.9">
    <molecule id="P08047-1"/>
    <property type="protein sequence ID" value="ENSP00000329357.4"/>
    <property type="gene ID" value="ENSG00000185591.10"/>
</dbReference>
<dbReference type="Ensembl" id="ENST00000426431.2">
    <molecule id="P08047-2"/>
    <property type="protein sequence ID" value="ENSP00000404263.2"/>
    <property type="gene ID" value="ENSG00000185591.10"/>
</dbReference>
<dbReference type="GeneID" id="6667"/>
<dbReference type="KEGG" id="hsa:6667"/>
<dbReference type="MANE-Select" id="ENST00000327443.9">
    <property type="protein sequence ID" value="ENSP00000329357.4"/>
    <property type="RefSeq nucleotide sequence ID" value="NM_138473.3"/>
    <property type="RefSeq protein sequence ID" value="NP_612482.2"/>
</dbReference>
<dbReference type="UCSC" id="uc001scw.4">
    <molecule id="P08047-1"/>
    <property type="organism name" value="human"/>
</dbReference>
<dbReference type="AGR" id="HGNC:11205"/>
<dbReference type="CTD" id="6667"/>
<dbReference type="DisGeNET" id="6667"/>
<dbReference type="GeneCards" id="SP1"/>
<dbReference type="HGNC" id="HGNC:11205">
    <property type="gene designation" value="SP1"/>
</dbReference>
<dbReference type="HPA" id="ENSG00000185591">
    <property type="expression patterns" value="Low tissue specificity"/>
</dbReference>
<dbReference type="MIM" id="189906">
    <property type="type" value="gene"/>
</dbReference>
<dbReference type="neXtProt" id="NX_P08047"/>
<dbReference type="OpenTargets" id="ENSG00000185591"/>
<dbReference type="PharmGKB" id="PA36042"/>
<dbReference type="VEuPathDB" id="HostDB:ENSG00000185591"/>
<dbReference type="eggNOG" id="KOG1721">
    <property type="taxonomic scope" value="Eukaryota"/>
</dbReference>
<dbReference type="GeneTree" id="ENSGT00940000157804"/>
<dbReference type="HOGENOM" id="CLU_019688_2_0_1"/>
<dbReference type="InParanoid" id="P08047"/>
<dbReference type="OMA" id="IMNFAPS"/>
<dbReference type="OrthoDB" id="6365676at2759"/>
<dbReference type="PAN-GO" id="P08047">
    <property type="GO annotations" value="3 GO annotations based on evolutionary models"/>
</dbReference>
<dbReference type="PhylomeDB" id="P08047"/>
<dbReference type="TreeFam" id="TF350150"/>
<dbReference type="PathwayCommons" id="P08047"/>
<dbReference type="Reactome" id="R-HSA-1989781">
    <property type="pathway name" value="PPARA activates gene expression"/>
</dbReference>
<dbReference type="Reactome" id="R-HSA-2173796">
    <property type="pathway name" value="SMAD2/SMAD3:SMAD4 heterotrimer regulates transcription"/>
</dbReference>
<dbReference type="Reactome" id="R-HSA-2426168">
    <property type="pathway name" value="Activation of gene expression by SREBF (SREBP)"/>
</dbReference>
<dbReference type="Reactome" id="R-HSA-2559585">
    <property type="pathway name" value="Oncogene Induced Senescence"/>
</dbReference>
<dbReference type="Reactome" id="R-HSA-6807505">
    <property type="pathway name" value="RNA polymerase II transcribes snRNA genes"/>
</dbReference>
<dbReference type="Reactome" id="R-HSA-9018519">
    <property type="pathway name" value="Estrogen-dependent gene expression"/>
</dbReference>
<dbReference type="Reactome" id="R-HSA-9735871">
    <property type="pathway name" value="SARS-CoV-1 targets host intracellular signalling and regulatory pathways"/>
</dbReference>
<dbReference type="Reactome" id="R-HSA-9762293">
    <property type="pathway name" value="Regulation of CDH11 gene transcription"/>
</dbReference>
<dbReference type="Reactome" id="R-HSA-9818030">
    <property type="pathway name" value="NFE2L2 regulating tumorigenic genes"/>
</dbReference>
<dbReference type="Reactome" id="R-HSA-9839394">
    <property type="pathway name" value="TGFBR3 expression"/>
</dbReference>
<dbReference type="SignaLink" id="P08047"/>
<dbReference type="SIGNOR" id="P08047"/>
<dbReference type="BioGRID-ORCS" id="6667">
    <property type="hits" value="167 hits in 1197 CRISPR screens"/>
</dbReference>
<dbReference type="CD-CODE" id="38EC0B30">
    <property type="entry name" value="Transcriptional condensate"/>
</dbReference>
<dbReference type="CD-CODE" id="8C2F96ED">
    <property type="entry name" value="Centrosome"/>
</dbReference>
<dbReference type="CD-CODE" id="B5B9A610">
    <property type="entry name" value="PML body"/>
</dbReference>
<dbReference type="ChiTaRS" id="SP1">
    <property type="organism name" value="human"/>
</dbReference>
<dbReference type="EvolutionaryTrace" id="P08047"/>
<dbReference type="GeneWiki" id="Sp1_transcription_factor"/>
<dbReference type="GenomeRNAi" id="6667"/>
<dbReference type="Pharos" id="P08047">
    <property type="development level" value="Tbio"/>
</dbReference>
<dbReference type="PRO" id="PR:P08047"/>
<dbReference type="Proteomes" id="UP000005640">
    <property type="component" value="Chromosome 12"/>
</dbReference>
<dbReference type="RNAct" id="P08047">
    <property type="molecule type" value="protein"/>
</dbReference>
<dbReference type="Bgee" id="ENSG00000185591">
    <property type="expression patterns" value="Expressed in nipple and 188 other cell types or tissues"/>
</dbReference>
<dbReference type="ExpressionAtlas" id="P08047">
    <property type="expression patterns" value="baseline and differential"/>
</dbReference>
<dbReference type="GO" id="GO:0000785">
    <property type="term" value="C:chromatin"/>
    <property type="evidence" value="ECO:0000314"/>
    <property type="project" value="BHF-UCL"/>
</dbReference>
<dbReference type="GO" id="GO:0005737">
    <property type="term" value="C:cytoplasm"/>
    <property type="evidence" value="ECO:0007669"/>
    <property type="project" value="UniProtKB-SubCell"/>
</dbReference>
<dbReference type="GO" id="GO:0000791">
    <property type="term" value="C:euchromatin"/>
    <property type="evidence" value="ECO:0000314"/>
    <property type="project" value="ARUK-UCL"/>
</dbReference>
<dbReference type="GO" id="GO:0005654">
    <property type="term" value="C:nucleoplasm"/>
    <property type="evidence" value="ECO:0000314"/>
    <property type="project" value="ParkinsonsUK-UCL"/>
</dbReference>
<dbReference type="GO" id="GO:0005634">
    <property type="term" value="C:nucleus"/>
    <property type="evidence" value="ECO:0000314"/>
    <property type="project" value="HGNC-UCL"/>
</dbReference>
<dbReference type="GO" id="GO:0032993">
    <property type="term" value="C:protein-DNA complex"/>
    <property type="evidence" value="ECO:0000250"/>
    <property type="project" value="ARUK-UCL"/>
</dbReference>
<dbReference type="GO" id="GO:0017053">
    <property type="term" value="C:transcription repressor complex"/>
    <property type="evidence" value="ECO:0000314"/>
    <property type="project" value="CAFA"/>
</dbReference>
<dbReference type="GO" id="GO:0043425">
    <property type="term" value="F:bHLH transcription factor binding"/>
    <property type="evidence" value="ECO:0000250"/>
    <property type="project" value="BHF-UCL"/>
</dbReference>
<dbReference type="GO" id="GO:0003677">
    <property type="term" value="F:DNA binding"/>
    <property type="evidence" value="ECO:0000314"/>
    <property type="project" value="UniProtKB"/>
</dbReference>
<dbReference type="GO" id="GO:0001228">
    <property type="term" value="F:DNA-binding transcription activator activity, RNA polymerase II-specific"/>
    <property type="evidence" value="ECO:0000314"/>
    <property type="project" value="ARUK-UCL"/>
</dbReference>
<dbReference type="GO" id="GO:0003700">
    <property type="term" value="F:DNA-binding transcription factor activity"/>
    <property type="evidence" value="ECO:0000314"/>
    <property type="project" value="UniProtKB"/>
</dbReference>
<dbReference type="GO" id="GO:0000981">
    <property type="term" value="F:DNA-binding transcription factor activity, RNA polymerase II-specific"/>
    <property type="evidence" value="ECO:0000314"/>
    <property type="project" value="BHF-UCL"/>
</dbReference>
<dbReference type="GO" id="GO:0003690">
    <property type="term" value="F:double-stranded DNA binding"/>
    <property type="evidence" value="ECO:0000314"/>
    <property type="project" value="BHF-UCL"/>
</dbReference>
<dbReference type="GO" id="GO:0035035">
    <property type="term" value="F:histone acetyltransferase binding"/>
    <property type="evidence" value="ECO:0007669"/>
    <property type="project" value="Ensembl"/>
</dbReference>
<dbReference type="GO" id="GO:0042826">
    <property type="term" value="F:histone deacetylase binding"/>
    <property type="evidence" value="ECO:0000353"/>
    <property type="project" value="BHF-UCL"/>
</dbReference>
<dbReference type="GO" id="GO:0042802">
    <property type="term" value="F:identical protein binding"/>
    <property type="evidence" value="ECO:0000353"/>
    <property type="project" value="IntAct"/>
</dbReference>
<dbReference type="GO" id="GO:0060090">
    <property type="term" value="F:molecular adaptor activity"/>
    <property type="evidence" value="ECO:0000269"/>
    <property type="project" value="DisProt"/>
</dbReference>
<dbReference type="GO" id="GO:0042803">
    <property type="term" value="F:protein homodimerization activity"/>
    <property type="evidence" value="ECO:0000314"/>
    <property type="project" value="UniProtKB"/>
</dbReference>
<dbReference type="GO" id="GO:0000978">
    <property type="term" value="F:RNA polymerase II cis-regulatory region sequence-specific DNA binding"/>
    <property type="evidence" value="ECO:0000314"/>
    <property type="project" value="ARUK-UCL"/>
</dbReference>
<dbReference type="GO" id="GO:0000977">
    <property type="term" value="F:RNA polymerase II transcription regulatory region sequence-specific DNA binding"/>
    <property type="evidence" value="ECO:0000314"/>
    <property type="project" value="UniProtKB"/>
</dbReference>
<dbReference type="GO" id="GO:0061629">
    <property type="term" value="F:RNA polymerase II-specific DNA-binding transcription factor binding"/>
    <property type="evidence" value="ECO:0000250"/>
    <property type="project" value="BHF-UCL"/>
</dbReference>
<dbReference type="GO" id="GO:0043565">
    <property type="term" value="F:sequence-specific DNA binding"/>
    <property type="evidence" value="ECO:0000314"/>
    <property type="project" value="HGNC-UCL"/>
</dbReference>
<dbReference type="GO" id="GO:1990837">
    <property type="term" value="F:sequence-specific double-stranded DNA binding"/>
    <property type="evidence" value="ECO:0000314"/>
    <property type="project" value="ARUK-UCL"/>
</dbReference>
<dbReference type="GO" id="GO:0000976">
    <property type="term" value="F:transcription cis-regulatory region binding"/>
    <property type="evidence" value="ECO:0000314"/>
    <property type="project" value="BHF-UCL"/>
</dbReference>
<dbReference type="GO" id="GO:0001221">
    <property type="term" value="F:transcription coregulator binding"/>
    <property type="evidence" value="ECO:0000353"/>
    <property type="project" value="UniProtKB"/>
</dbReference>
<dbReference type="GO" id="GO:0008270">
    <property type="term" value="F:zinc ion binding"/>
    <property type="evidence" value="ECO:0007669"/>
    <property type="project" value="UniProtKB-KW"/>
</dbReference>
<dbReference type="GO" id="GO:0071391">
    <property type="term" value="P:cellular response to estrogen stimulus"/>
    <property type="evidence" value="ECO:0007669"/>
    <property type="project" value="Ensembl"/>
</dbReference>
<dbReference type="GO" id="GO:0032869">
    <property type="term" value="P:cellular response to insulin stimulus"/>
    <property type="evidence" value="ECO:0007669"/>
    <property type="project" value="Ensembl"/>
</dbReference>
<dbReference type="GO" id="GO:1904568">
    <property type="term" value="P:cellular response to wortmannin"/>
    <property type="evidence" value="ECO:0007669"/>
    <property type="project" value="Ensembl"/>
</dbReference>
<dbReference type="GO" id="GO:0034224">
    <property type="term" value="P:cellular response to zinc ion starvation"/>
    <property type="evidence" value="ECO:0007669"/>
    <property type="project" value="Ensembl"/>
</dbReference>
<dbReference type="GO" id="GO:0043923">
    <property type="term" value="P:positive regulation by host of viral transcription"/>
    <property type="evidence" value="ECO:0000314"/>
    <property type="project" value="UniProtKB"/>
</dbReference>
<dbReference type="GO" id="GO:1902004">
    <property type="term" value="P:positive regulation of amyloid-beta formation"/>
    <property type="evidence" value="ECO:0000315"/>
    <property type="project" value="ARUK-UCL"/>
</dbReference>
<dbReference type="GO" id="GO:0045766">
    <property type="term" value="P:positive regulation of angiogenesis"/>
    <property type="evidence" value="ECO:0000315"/>
    <property type="project" value="BHF-UCL"/>
</dbReference>
<dbReference type="GO" id="GO:2001235">
    <property type="term" value="P:positive regulation of apoptotic signaling pathway"/>
    <property type="evidence" value="ECO:0000314"/>
    <property type="project" value="BHF-UCL"/>
</dbReference>
<dbReference type="GO" id="GO:0043536">
    <property type="term" value="P:positive regulation of blood vessel endothelial cell migration"/>
    <property type="evidence" value="ECO:0000315"/>
    <property type="project" value="BHF-UCL"/>
</dbReference>
<dbReference type="GO" id="GO:0045893">
    <property type="term" value="P:positive regulation of DNA-templated transcription"/>
    <property type="evidence" value="ECO:0000314"/>
    <property type="project" value="UniProtKB"/>
</dbReference>
<dbReference type="GO" id="GO:0010628">
    <property type="term" value="P:positive regulation of gene expression"/>
    <property type="evidence" value="ECO:0000315"/>
    <property type="project" value="BHF-UCL"/>
</dbReference>
<dbReference type="GO" id="GO:1904828">
    <property type="term" value="P:positive regulation of hydrogen sulfide biosynthetic process"/>
    <property type="evidence" value="ECO:0000314"/>
    <property type="project" value="BHF-UCL"/>
</dbReference>
<dbReference type="GO" id="GO:0045944">
    <property type="term" value="P:positive regulation of transcription by RNA polymerase II"/>
    <property type="evidence" value="ECO:0000314"/>
    <property type="project" value="UniProtKB"/>
</dbReference>
<dbReference type="GO" id="GO:1905564">
    <property type="term" value="P:positive regulation of vascular endothelial cell proliferation"/>
    <property type="evidence" value="ECO:0000315"/>
    <property type="project" value="BHF-UCL"/>
</dbReference>
<dbReference type="GO" id="GO:0006355">
    <property type="term" value="P:regulation of DNA-templated transcription"/>
    <property type="evidence" value="ECO:0000314"/>
    <property type="project" value="UniProtKB"/>
</dbReference>
<dbReference type="GO" id="GO:0006357">
    <property type="term" value="P:regulation of transcription by RNA polymerase II"/>
    <property type="evidence" value="ECO:0000318"/>
    <property type="project" value="GO_Central"/>
</dbReference>
<dbReference type="GO" id="GO:0033194">
    <property type="term" value="P:response to hydroperoxide"/>
    <property type="evidence" value="ECO:0000250"/>
    <property type="project" value="UniProtKB"/>
</dbReference>
<dbReference type="GO" id="GO:0048511">
    <property type="term" value="P:rhythmic process"/>
    <property type="evidence" value="ECO:0007669"/>
    <property type="project" value="UniProtKB-KW"/>
</dbReference>
<dbReference type="CDD" id="cd22539">
    <property type="entry name" value="SP1_N"/>
    <property type="match status" value="1"/>
</dbReference>
<dbReference type="DisProt" id="DP00378"/>
<dbReference type="FunFam" id="3.30.160.60:FF:000014">
    <property type="entry name" value="Transcription factor Sp3"/>
    <property type="match status" value="1"/>
</dbReference>
<dbReference type="FunFam" id="3.30.160.60:FF:000026">
    <property type="entry name" value="Transcription factor Sp3"/>
    <property type="match status" value="1"/>
</dbReference>
<dbReference type="FunFam" id="3.30.160.60:FF:000061">
    <property type="entry name" value="Transcription factor Sp3"/>
    <property type="match status" value="1"/>
</dbReference>
<dbReference type="Gene3D" id="3.30.160.60">
    <property type="entry name" value="Classic Zinc Finger"/>
    <property type="match status" value="3"/>
</dbReference>
<dbReference type="IDEAL" id="IID00266"/>
<dbReference type="InterPro" id="IPR036236">
    <property type="entry name" value="Znf_C2H2_sf"/>
</dbReference>
<dbReference type="InterPro" id="IPR013087">
    <property type="entry name" value="Znf_C2H2_type"/>
</dbReference>
<dbReference type="PANTHER" id="PTHR23235">
    <property type="entry name" value="KRUEPPEL-LIKE TRANSCRIPTION FACTOR"/>
    <property type="match status" value="1"/>
</dbReference>
<dbReference type="PANTHER" id="PTHR23235:SF16">
    <property type="entry name" value="TRANSCRIPTION FACTOR SP1"/>
    <property type="match status" value="1"/>
</dbReference>
<dbReference type="Pfam" id="PF00096">
    <property type="entry name" value="zf-C2H2"/>
    <property type="match status" value="2"/>
</dbReference>
<dbReference type="SMART" id="SM00355">
    <property type="entry name" value="ZnF_C2H2"/>
    <property type="match status" value="3"/>
</dbReference>
<dbReference type="SUPFAM" id="SSF57667">
    <property type="entry name" value="beta-beta-alpha zinc fingers"/>
    <property type="match status" value="1"/>
</dbReference>
<dbReference type="PROSITE" id="PS00028">
    <property type="entry name" value="ZINC_FINGER_C2H2_1"/>
    <property type="match status" value="3"/>
</dbReference>
<dbReference type="PROSITE" id="PS50157">
    <property type="entry name" value="ZINC_FINGER_C2H2_2"/>
    <property type="match status" value="3"/>
</dbReference>
<evidence type="ECO:0000250" key="1">
    <source>
        <dbReference type="UniProtKB" id="O89090"/>
    </source>
</evidence>
<evidence type="ECO:0000250" key="2">
    <source>
        <dbReference type="UniProtKB" id="Q01714"/>
    </source>
</evidence>
<evidence type="ECO:0000255" key="3">
    <source>
        <dbReference type="PROSITE-ProRule" id="PRU00042"/>
    </source>
</evidence>
<evidence type="ECO:0000256" key="4">
    <source>
        <dbReference type="SAM" id="MobiDB-lite"/>
    </source>
</evidence>
<evidence type="ECO:0000269" key="5">
    <source>
    </source>
</evidence>
<evidence type="ECO:0000269" key="6">
    <source>
    </source>
</evidence>
<evidence type="ECO:0000269" key="7">
    <source>
    </source>
</evidence>
<evidence type="ECO:0000269" key="8">
    <source>
    </source>
</evidence>
<evidence type="ECO:0000269" key="9">
    <source>
    </source>
</evidence>
<evidence type="ECO:0000269" key="10">
    <source>
    </source>
</evidence>
<evidence type="ECO:0000269" key="11">
    <source>
    </source>
</evidence>
<evidence type="ECO:0000269" key="12">
    <source>
    </source>
</evidence>
<evidence type="ECO:0000269" key="13">
    <source>
    </source>
</evidence>
<evidence type="ECO:0000269" key="14">
    <source>
    </source>
</evidence>
<evidence type="ECO:0000269" key="15">
    <source>
    </source>
</evidence>
<evidence type="ECO:0000269" key="16">
    <source>
    </source>
</evidence>
<evidence type="ECO:0000269" key="17">
    <source>
    </source>
</evidence>
<evidence type="ECO:0000269" key="18">
    <source>
    </source>
</evidence>
<evidence type="ECO:0000269" key="19">
    <source>
    </source>
</evidence>
<evidence type="ECO:0000269" key="20">
    <source>
    </source>
</evidence>
<evidence type="ECO:0000269" key="21">
    <source>
    </source>
</evidence>
<evidence type="ECO:0000269" key="22">
    <source>
    </source>
</evidence>
<evidence type="ECO:0000269" key="23">
    <source>
    </source>
</evidence>
<evidence type="ECO:0000269" key="24">
    <source>
    </source>
</evidence>
<evidence type="ECO:0000269" key="25">
    <source>
    </source>
</evidence>
<evidence type="ECO:0000269" key="26">
    <source>
    </source>
</evidence>
<evidence type="ECO:0000269" key="27">
    <source>
    </source>
</evidence>
<evidence type="ECO:0000269" key="28">
    <source>
    </source>
</evidence>
<evidence type="ECO:0000269" key="29">
    <source>
    </source>
</evidence>
<evidence type="ECO:0000269" key="30">
    <source>
    </source>
</evidence>
<evidence type="ECO:0000269" key="31">
    <source>
    </source>
</evidence>
<evidence type="ECO:0000269" key="32">
    <source>
    </source>
</evidence>
<evidence type="ECO:0000269" key="33">
    <source>
    </source>
</evidence>
<evidence type="ECO:0000269" key="34">
    <source>
    </source>
</evidence>
<evidence type="ECO:0000269" key="35">
    <source>
    </source>
</evidence>
<evidence type="ECO:0000269" key="36">
    <source>
    </source>
</evidence>
<evidence type="ECO:0000269" key="37">
    <source>
    </source>
</evidence>
<evidence type="ECO:0000269" key="38">
    <source>
    </source>
</evidence>
<evidence type="ECO:0000269" key="39">
    <source>
    </source>
</evidence>
<evidence type="ECO:0000269" key="40">
    <source>
    </source>
</evidence>
<evidence type="ECO:0000269" key="41">
    <source>
    </source>
</evidence>
<evidence type="ECO:0000269" key="42">
    <source>
    </source>
</evidence>
<evidence type="ECO:0000303" key="43">
    <source>
    </source>
</evidence>
<evidence type="ECO:0000305" key="44"/>
<evidence type="ECO:0000305" key="45">
    <source>
    </source>
</evidence>
<evidence type="ECO:0000305" key="46">
    <source>
    </source>
</evidence>
<evidence type="ECO:0007744" key="47">
    <source>
    </source>
</evidence>
<evidence type="ECO:0007744" key="48">
    <source>
    </source>
</evidence>
<evidence type="ECO:0007744" key="49">
    <source>
    </source>
</evidence>
<evidence type="ECO:0007744" key="50">
    <source>
    </source>
</evidence>
<evidence type="ECO:0007744" key="51">
    <source>
    </source>
</evidence>
<evidence type="ECO:0007744" key="52">
    <source>
    </source>
</evidence>
<evidence type="ECO:0007744" key="53">
    <source>
    </source>
</evidence>
<evidence type="ECO:0007829" key="54">
    <source>
        <dbReference type="PDB" id="1SP1"/>
    </source>
</evidence>
<evidence type="ECO:0007829" key="55">
    <source>
        <dbReference type="PDB" id="1SP2"/>
    </source>
</evidence>
<evidence type="ECO:0007829" key="56">
    <source>
        <dbReference type="PDB" id="1VA1"/>
    </source>
</evidence>
<evidence type="ECO:0007829" key="57">
    <source>
        <dbReference type="PDB" id="1VA2"/>
    </source>
</evidence>
<evidence type="ECO:0007829" key="58">
    <source>
        <dbReference type="PDB" id="6PV0"/>
    </source>
</evidence>
<evidence type="ECO:0007829" key="59">
    <source>
        <dbReference type="PDB" id="6UCO"/>
    </source>
</evidence>
<feature type="initiator methionine" description="Removed" evidence="49 50">
    <location>
        <position position="1"/>
    </location>
</feature>
<feature type="chain" id="PRO_0000047137" description="Transcription factor Sp1">
    <location>
        <begin position="2"/>
        <end position="785"/>
    </location>
</feature>
<feature type="zinc finger region" description="C2H2-type 1" evidence="3">
    <location>
        <begin position="626"/>
        <end position="650"/>
    </location>
</feature>
<feature type="zinc finger region" description="C2H2-type 2" evidence="3">
    <location>
        <begin position="656"/>
        <end position="680"/>
    </location>
</feature>
<feature type="zinc finger region" description="C2H2-type 3" evidence="3">
    <location>
        <begin position="686"/>
        <end position="708"/>
    </location>
</feature>
<feature type="region of interest" description="Disordered" evidence="4">
    <location>
        <begin position="1"/>
        <end position="93"/>
    </location>
</feature>
<feature type="region of interest" description="Repressor domain">
    <location>
        <begin position="2"/>
        <end position="82"/>
    </location>
</feature>
<feature type="region of interest" description="Disordered" evidence="4">
    <location>
        <begin position="109"/>
        <end position="141"/>
    </location>
</feature>
<feature type="region of interest" description="Transactivation domain A (Gln-rich)">
    <location>
        <begin position="146"/>
        <end position="251"/>
    </location>
</feature>
<feature type="region of interest" description="Transactivation domain B (Gln-rich)">
    <location>
        <begin position="261"/>
        <end position="495"/>
    </location>
</feature>
<feature type="region of interest" description="Disordered" evidence="4">
    <location>
        <begin position="329"/>
        <end position="395"/>
    </location>
</feature>
<feature type="region of interest" description="Transactivation domain C (highly charged)">
    <location>
        <begin position="496"/>
        <end position="610"/>
    </location>
</feature>
<feature type="region of interest" description="Disordered" evidence="4">
    <location>
        <begin position="567"/>
        <end position="598"/>
    </location>
</feature>
<feature type="region of interest" description="VZV IE62-binding">
    <location>
        <begin position="619"/>
        <end position="785"/>
    </location>
</feature>
<feature type="region of interest" description="Domain D">
    <location>
        <begin position="708"/>
        <end position="785"/>
    </location>
</feature>
<feature type="short sequence motif" description="9aaTAD" evidence="38">
    <location>
        <begin position="462"/>
        <end position="470"/>
    </location>
</feature>
<feature type="compositionally biased region" description="Gly residues" evidence="4">
    <location>
        <begin position="20"/>
        <end position="34"/>
    </location>
</feature>
<feature type="compositionally biased region" description="Low complexity" evidence="4">
    <location>
        <begin position="72"/>
        <end position="85"/>
    </location>
</feature>
<feature type="compositionally biased region" description="Polar residues" evidence="4">
    <location>
        <begin position="109"/>
        <end position="123"/>
    </location>
</feature>
<feature type="compositionally biased region" description="Low complexity" evidence="4">
    <location>
        <begin position="124"/>
        <end position="136"/>
    </location>
</feature>
<feature type="compositionally biased region" description="Low complexity" evidence="4">
    <location>
        <begin position="342"/>
        <end position="357"/>
    </location>
</feature>
<feature type="compositionally biased region" description="Polar residues" evidence="4">
    <location>
        <begin position="358"/>
        <end position="379"/>
    </location>
</feature>
<feature type="compositionally biased region" description="Low complexity" evidence="4">
    <location>
        <begin position="381"/>
        <end position="395"/>
    </location>
</feature>
<feature type="site" description="Cleavage" evidence="44">
    <location>
        <begin position="63"/>
        <end position="64"/>
    </location>
</feature>
<feature type="modified residue" description="N-acetylserine" evidence="49 50">
    <location>
        <position position="2"/>
    </location>
</feature>
<feature type="modified residue" description="Phosphoserine" evidence="49 51">
    <location>
        <position position="2"/>
    </location>
</feature>
<feature type="modified residue" description="Phosphoserine" evidence="24 49 50 51">
    <location>
        <position position="7"/>
    </location>
</feature>
<feature type="modified residue" description="Phosphoserine" evidence="21 23 24 47 51">
    <location>
        <position position="59"/>
    </location>
</feature>
<feature type="modified residue" description="Phosphoserine; by ATM" evidence="22 27">
    <location>
        <position position="101"/>
    </location>
</feature>
<feature type="modified residue" description="Phosphothreonine; by MAPK8" evidence="45">
    <location>
        <position position="278"/>
    </location>
</feature>
<feature type="modified residue" description="Phosphothreonine; by MAPK1 and MAPK3" evidence="8 13 16">
    <location>
        <position position="453"/>
    </location>
</feature>
<feature type="modified residue" description="Phosphoserine; alternate" evidence="15">
    <location>
        <position position="612"/>
    </location>
</feature>
<feature type="modified residue" description="Phosphothreonine; alternate" evidence="15">
    <location>
        <position position="640"/>
    </location>
</feature>
<feature type="modified residue" description="Phosphoserine; by PKC/PRKCZ; alternate" evidence="15 20">
    <location>
        <position position="641"/>
    </location>
</feature>
<feature type="modified residue" description="Phosphothreonine; by PKC/PRKCZ" evidence="48">
    <location>
        <position position="651"/>
    </location>
</feature>
<feature type="modified residue" description="Phosphothreonine" evidence="25">
    <location>
        <position position="668"/>
    </location>
</feature>
<feature type="modified residue" description="Phosphoserine; by PKC/PRKCZ" evidence="25">
    <location>
        <position position="670"/>
    </location>
</feature>
<feature type="modified residue" description="Phosphothreonine; by PKC/PRKCZ" evidence="21 25">
    <location>
        <position position="681"/>
    </location>
</feature>
<feature type="modified residue" description="Phosphoserine; alternate" evidence="15">
    <location>
        <position position="698"/>
    </location>
</feature>
<feature type="modified residue" description="Phosphoserine; alternate" evidence="15 46">
    <location>
        <position position="702"/>
    </location>
</feature>
<feature type="modified residue" description="N6-acetyllysine" evidence="18">
    <location>
        <position position="703"/>
    </location>
</feature>
<feature type="modified residue" description="Phosphothreonine; by MAPK1, MAPK3 and MAPK8" evidence="8 13 16">
    <location>
        <position position="739"/>
    </location>
</feature>
<feature type="glycosylation site" description="O-linked (GlcNAc) serine" evidence="7 41">
    <location>
        <position position="491"/>
    </location>
</feature>
<feature type="glycosylation site" description="O-linked (GlcNAc) serine; alternate" evidence="15">
    <location>
        <position position="612"/>
    </location>
</feature>
<feature type="glycosylation site" description="O-linked (GlcNAc) threonine; alternate" evidence="15">
    <location>
        <position position="640"/>
    </location>
</feature>
<feature type="glycosylation site" description="O-linked (GlcNAc) serine; alternate" evidence="15">
    <location>
        <position position="641"/>
    </location>
</feature>
<feature type="glycosylation site" description="O-linked (GlcNAc) serine; alternate" evidence="15">
    <location>
        <position position="698"/>
    </location>
</feature>
<feature type="glycosylation site" description="O-linked (GlcNAc) serine; alternate" evidence="15">
    <location>
        <position position="702"/>
    </location>
</feature>
<feature type="cross-link" description="Glycyl lysine isopeptide (Lys-Gly) (interchain with G-Cter in SUMO); alternate">
    <location>
        <position position="16"/>
    </location>
</feature>
<feature type="cross-link" description="Glycyl lysine isopeptide (Lys-Gly) (interchain with G-Cter in SUMO2); alternate" evidence="52 53">
    <location>
        <position position="16"/>
    </location>
</feature>
<feature type="splice variant" id="VSP_053934" description="In isoform 2." evidence="44">
    <location>
        <begin position="1"/>
        <end position="7"/>
    </location>
</feature>
<feature type="splice variant" id="VSP_053935" description="In isoform 3." evidence="43">
    <location>
        <begin position="54"/>
        <end position="101"/>
    </location>
</feature>
<feature type="sequence variant" id="VAR_019971" description="In dbSNP:rs3741665.">
    <original>T</original>
    <variation>A</variation>
    <location>
        <position position="737"/>
    </location>
</feature>
<feature type="mutagenesis site" description="Increase in protein stability. No change in sumoylation." evidence="24">
    <original>S</original>
    <variation>A</variation>
    <location>
        <position position="7"/>
    </location>
</feature>
<feature type="mutagenesis site" description="Enhanced transcriptional activity.">
    <original>V</original>
    <variation>R</variation>
    <location>
        <position position="15"/>
    </location>
</feature>
<feature type="mutagenesis site" description="Loss of sumoylation. No cleavage and reduced transcriptional activity." evidence="17">
    <original>K</original>
    <variation>R</variation>
    <location>
        <position position="16"/>
    </location>
</feature>
<feature type="mutagenesis site" description="Loss of sumoylation. Increased cleavage and enhanced transcriptional activity." evidence="17">
    <original>E</original>
    <variation>A</variation>
    <location>
        <position position="18"/>
    </location>
</feature>
<feature type="mutagenesis site" description="No effect on sumoylation nor on proteolytic cleavage." evidence="17">
    <original>K</original>
    <variation>R</variation>
    <location>
        <position position="19"/>
    </location>
</feature>
<feature type="mutagenesis site" description="No effect on phosphorylation on DNA damage." evidence="27">
    <original>S</original>
    <variation>A</variation>
    <location>
        <position position="36"/>
    </location>
</feature>
<feature type="mutagenesis site" description="No effect on phosphorylation on DNA damage." evidence="27">
    <original>S</original>
    <variation>A</variation>
    <location>
        <position position="56"/>
    </location>
</feature>
<feature type="mutagenesis site" description="Loss of phosphorylation. No effect on activated MAPK8-mediated phosphorylation. Similar loss of phosphorylation as by dephosphorylation by PP2AC. Reduced proteolytic processing." evidence="21 23 24">
    <original>S</original>
    <variation>A</variation>
    <location>
        <position position="59"/>
    </location>
</feature>
<feature type="mutagenesis site" description="Some association with chromatin, increased phosphorylation levels and decreased glycosylation." evidence="21 23 24">
    <original>S</original>
    <variation>E</variation>
    <location>
        <position position="59"/>
    </location>
</feature>
<feature type="mutagenesis site" description="Little effect on activated MAPK8-mediated phosphorylation." evidence="23">
    <original>S</original>
    <variation>A</variation>
    <location>
        <position position="73"/>
    </location>
</feature>
<feature type="mutagenesis site" description="No effect on phosphorylation on DNA damage." evidence="27">
    <original>S</original>
    <variation>A</variation>
    <location>
        <position position="81"/>
    </location>
</feature>
<feature type="mutagenesis site" description="No effect on phosphorylation on DNA damage." evidence="27">
    <original>S</original>
    <variation>A</variation>
    <location>
        <position position="85"/>
    </location>
</feature>
<feature type="mutagenesis site" description="No effect on phosphorylation on DNA damage." evidence="27">
    <original>T</original>
    <variation>A</variation>
    <location>
        <position position="98"/>
    </location>
</feature>
<feature type="mutagenesis site" description="Significant reduction of phosphorylation on DNA damage." evidence="22 27">
    <original>S</original>
    <variation>A</variation>
    <location>
        <position position="101"/>
    </location>
</feature>
<feature type="mutagenesis site" description="Increase in phosphorylation on DNA damage." evidence="22 27">
    <original>S</original>
    <variation>D</variation>
    <location>
        <position position="101"/>
    </location>
</feature>
<feature type="mutagenesis site" description="No effect on activated MAPK8-mediated phosphorylation." evidence="23">
    <original>T</original>
    <variation>A</variation>
    <location>
        <position position="117"/>
    </location>
</feature>
<feature type="mutagenesis site" description="No effect on dephosphorylation by PP2A." evidence="21">
    <original>S</original>
    <variation>A</variation>
    <location>
        <position position="220"/>
    </location>
</feature>
<feature type="mutagenesis site" description="No effect on phosphorylation on DNA damage." evidence="27">
    <original>T</original>
    <variation>A</variation>
    <location>
        <position position="250"/>
    </location>
</feature>
<feature type="mutagenesis site" description="Almost complete abolition of activated MAPK8-mediated phosphorylation and 40% reduction in protein levels during mitosis. Protein levels reduced by 70% during mitosis; when associated with A-739." evidence="23">
    <original>T</original>
    <variation>A</variation>
    <location>
        <position position="278"/>
    </location>
</feature>
<feature type="mutagenesis site" description="Increased protein stability during mitosis; when associated with D-739." evidence="23">
    <original>T</original>
    <variation>D</variation>
    <location>
        <position position="278"/>
    </location>
</feature>
<feature type="mutagenesis site" description="No effect on phosphorylation on DNA damage." evidence="27">
    <original>S</original>
    <variation>A</variation>
    <location>
        <position position="281"/>
    </location>
</feature>
<feature type="mutagenesis site" description="No effect on phosphorylation on DNA damage." evidence="27">
    <original>S</original>
    <variation>A</variation>
    <location>
        <position position="291"/>
    </location>
</feature>
<feature type="mutagenesis site" description="No effect on phosphorylation on DNA damage." evidence="27">
    <original>S</original>
    <variation>A</variation>
    <location>
        <position position="296"/>
    </location>
</feature>
<feature type="mutagenesis site" description="No effect on phosphorylation on DNA damage." evidence="27">
    <original>S</original>
    <variation>A</variation>
    <location>
        <position position="313"/>
    </location>
</feature>
<feature type="mutagenesis site" description="No effect on phosphorylation on DNA damage." evidence="27">
    <original>S</original>
    <variation>A</variation>
    <location>
        <position position="351"/>
    </location>
</feature>
<feature type="mutagenesis site" description="No effect on dephosphorylation by PP2A." evidence="8 21">
    <original>T</original>
    <variation>A</variation>
    <location>
        <position position="355"/>
    </location>
</feature>
<feature type="mutagenesis site" description="No effect on phosphorylation on DNA damage." evidence="27">
    <original>T</original>
    <variation>A</variation>
    <location>
        <position position="394"/>
    </location>
</feature>
<feature type="mutagenesis site" description="No effect on phosphorylation on DNA damage." evidence="27">
    <original>T</original>
    <variation>A</variation>
    <location>
        <position position="427"/>
    </location>
</feature>
<feature type="mutagenesis site" description="No effect on phosphorylation on DNA damage." evidence="27">
    <original>S</original>
    <variation>A</variation>
    <location>
        <position position="431"/>
    </location>
</feature>
<feature type="mutagenesis site" description="Abolishes MAPK-mediated phosphorylation, 50% reduction in MAPK1/MAPK3-mediated activity on VEGF promoter and no effect on dephosphorylation by PP2A. Greatly reduced MAPK1-mediated activity on VEGF promoter; when associated with A-739." evidence="8 13 21">
    <original>T</original>
    <variation>A</variation>
    <location>
        <position position="453"/>
    </location>
</feature>
<feature type="mutagenesis site" description="Loss of O-glycosylation. Increase in transcriptional activity." evidence="7 41">
    <original>S</original>
    <variation>A</variation>
    <location>
        <position position="491"/>
    </location>
</feature>
<feature type="mutagenesis site" description="Diminished glycosylation. Inhibits transcriptional activity; when associated with A-640; A-641; A-698 and A-702." evidence="26">
    <original>S</original>
    <variation>A</variation>
    <location>
        <position position="612"/>
    </location>
</feature>
<feature type="mutagenesis site" description="Diminished glycosylation. Inhibits transcriptional activity; when associated with A-612; A-641; A-698 and A-702." evidence="26">
    <original>T</original>
    <variation>A</variation>
    <location>
        <position position="640"/>
    </location>
</feature>
<feature type="mutagenesis site" description="Abolishes PRKCzeta-mediated phosphorylation. Diminished glycosylation. Inhibits transcriptional activity; when associated with A-612; A-640; A-641 and A-702." evidence="20 26">
    <original>S</original>
    <variation>A</variation>
    <location>
        <position position="641"/>
    </location>
</feature>
<feature type="mutagenesis site" description="No effect on dephosphorylation by PP2A." evidence="21">
    <original>T</original>
    <variation>A</variation>
    <location>
        <position position="651"/>
    </location>
</feature>
<feature type="mutagenesis site" description="Abolishes PRKCzeta-mediated but not PKCdelta-mediated phosphorylation. No effect on DNA binding; when associated with A-670 and A-681." evidence="25">
    <original>T</original>
    <variation>A</variation>
    <location>
        <position position="668"/>
    </location>
</feature>
<feature type="mutagenesis site" description="Abolishes PRKCzeta-mediated but not PKCdelta-mediated phosphorylation. No effect on DNA binding; when associated with A-668 and A-681." evidence="25">
    <original>S</original>
    <variation>A</variation>
    <location>
        <position position="670"/>
    </location>
</feature>
<feature type="mutagenesis site" description="Abolishes PRKCzeta-mediated but not PKCdelta-mediated phosphorylation. Some effect on dephosphorylation by PP2A. No effect on DNA binding; when associated with A-668 and A-681." evidence="21 25">
    <original>T</original>
    <variation>A</variation>
    <location>
        <position position="681"/>
    </location>
</feature>
<feature type="mutagenesis site" description="Diminished glycosylation. Inhibits transcriptional activity; when associated with A-612; A-640; A-641 and A-702." evidence="26">
    <original>S</original>
    <variation>A</variation>
    <location>
        <position position="698"/>
    </location>
</feature>
<feature type="mutagenesis site" description="Diminished glycosylation. Inhibits transcriptional activity; when associated with A-612; A-640; A-641 and A-698." evidence="26">
    <original>S</original>
    <variation>A</variation>
    <location>
        <position position="702"/>
    </location>
</feature>
<feature type="mutagenesis site" description="Abolishes acetylation. Increases recruitment of p300 to the promoter and enhances gene transcription." evidence="18">
    <original>K</original>
    <variation>A</variation>
    <location>
        <position position="703"/>
    </location>
</feature>
<feature type="mutagenesis site" description="Exhibits attenuated endoproteolytic cleavage; when associated with A-732." evidence="24">
    <original>S</original>
    <variation>A</variation>
    <location>
        <position position="728"/>
    </location>
</feature>
<feature type="mutagenesis site" description="Exhibits attenuated endoproteolytic cleavage; when associated with A-728." evidence="24">
    <original>S</original>
    <variation>A</variation>
    <location>
        <position position="732"/>
    </location>
</feature>
<feature type="mutagenesis site" description="Abolishes MAPK-mediated phosphorylation. 50% reduction in MAPK1/MAPK3-mediated activity on VEGF promoter, 40% reduction in protein levels during mitosis and no effect on dephosphorylation by PP2A. Greatly reduced MAPK1-mediated activity on VEGF promoter; when associated with A-453. Protein levels during mitosis reduced by 70%; when associated with A-278." evidence="8 13 21 23">
    <original>T</original>
    <variation>A</variation>
    <location>
        <position position="739"/>
    </location>
</feature>
<feature type="mutagenesis site" description="Increased protein stability during mitosis; when associated with D-278." evidence="8 13 21 23">
    <original>T</original>
    <variation>D</variation>
    <location>
        <position position="739"/>
    </location>
</feature>
<feature type="sequence conflict" description="In Ref. 7; AA sequence." evidence="44" ref="7">
    <original>D</original>
    <variation>G</variation>
    <location>
        <position position="366"/>
    </location>
</feature>
<feature type="sequence conflict" description="In Ref. 7; AA sequence." evidence="44" ref="7">
    <original>S</original>
    <variation>F</variation>
    <location>
        <position position="670"/>
    </location>
</feature>
<feature type="strand" evidence="56">
    <location>
        <begin position="620"/>
        <end position="622"/>
    </location>
</feature>
<feature type="strand" evidence="56">
    <location>
        <begin position="636"/>
        <end position="638"/>
    </location>
</feature>
<feature type="helix" evidence="56">
    <location>
        <begin position="640"/>
        <end position="651"/>
    </location>
</feature>
<feature type="strand" evidence="59">
    <location>
        <begin position="656"/>
        <end position="658"/>
    </location>
</feature>
<feature type="turn" evidence="57">
    <location>
        <begin position="661"/>
        <end position="663"/>
    </location>
</feature>
<feature type="strand" evidence="57">
    <location>
        <begin position="666"/>
        <end position="668"/>
    </location>
</feature>
<feature type="helix" evidence="55">
    <location>
        <begin position="670"/>
        <end position="677"/>
    </location>
</feature>
<feature type="turn" evidence="55">
    <location>
        <begin position="678"/>
        <end position="680"/>
    </location>
</feature>
<feature type="turn" evidence="58">
    <location>
        <begin position="681"/>
        <end position="683"/>
    </location>
</feature>
<feature type="turn" evidence="54">
    <location>
        <begin position="689"/>
        <end position="692"/>
    </location>
</feature>
<feature type="helix" evidence="54">
    <location>
        <begin position="699"/>
        <end position="706"/>
    </location>
</feature>
<feature type="helix" evidence="54">
    <location>
        <begin position="707"/>
        <end position="709"/>
    </location>
</feature>